<organism>
    <name type="scientific">Homo sapiens</name>
    <name type="common">Human</name>
    <dbReference type="NCBI Taxonomy" id="9606"/>
    <lineage>
        <taxon>Eukaryota</taxon>
        <taxon>Metazoa</taxon>
        <taxon>Chordata</taxon>
        <taxon>Craniata</taxon>
        <taxon>Vertebrata</taxon>
        <taxon>Euteleostomi</taxon>
        <taxon>Mammalia</taxon>
        <taxon>Eutheria</taxon>
        <taxon>Euarchontoglires</taxon>
        <taxon>Primates</taxon>
        <taxon>Haplorrhini</taxon>
        <taxon>Catarrhini</taxon>
        <taxon>Hominidae</taxon>
        <taxon>Homo</taxon>
    </lineage>
</organism>
<evidence type="ECO:0000250" key="1">
    <source>
        <dbReference type="UniProtKB" id="Q9Z204"/>
    </source>
</evidence>
<evidence type="ECO:0000255" key="2"/>
<evidence type="ECO:0000255" key="3">
    <source>
        <dbReference type="PROSITE-ProRule" id="PRU00176"/>
    </source>
</evidence>
<evidence type="ECO:0000256" key="4">
    <source>
        <dbReference type="SAM" id="MobiDB-lite"/>
    </source>
</evidence>
<evidence type="ECO:0000269" key="5">
    <source>
    </source>
</evidence>
<evidence type="ECO:0000269" key="6">
    <source>
    </source>
</evidence>
<evidence type="ECO:0000269" key="7">
    <source>
    </source>
</evidence>
<evidence type="ECO:0000269" key="8">
    <source>
    </source>
</evidence>
<evidence type="ECO:0000269" key="9">
    <source>
    </source>
</evidence>
<evidence type="ECO:0000269" key="10">
    <source>
    </source>
</evidence>
<evidence type="ECO:0000269" key="11">
    <source>
    </source>
</evidence>
<evidence type="ECO:0000269" key="12">
    <source>
    </source>
</evidence>
<evidence type="ECO:0000269" key="13">
    <source>
    </source>
</evidence>
<evidence type="ECO:0000269" key="14">
    <source>
    </source>
</evidence>
<evidence type="ECO:0000269" key="15">
    <source>
    </source>
</evidence>
<evidence type="ECO:0000269" key="16">
    <source>
    </source>
</evidence>
<evidence type="ECO:0000269" key="17">
    <source>
    </source>
</evidence>
<evidence type="ECO:0000269" key="18">
    <source>
    </source>
</evidence>
<evidence type="ECO:0000269" key="19">
    <source>
    </source>
</evidence>
<evidence type="ECO:0000269" key="20">
    <source ref="7"/>
</evidence>
<evidence type="ECO:0000303" key="21">
    <source>
    </source>
</evidence>
<evidence type="ECO:0000303" key="22">
    <source>
    </source>
</evidence>
<evidence type="ECO:0000303" key="23">
    <source ref="3"/>
</evidence>
<evidence type="ECO:0000305" key="24"/>
<evidence type="ECO:0007744" key="25">
    <source>
    </source>
</evidence>
<evidence type="ECO:0007744" key="26">
    <source>
    </source>
</evidence>
<evidence type="ECO:0007744" key="27">
    <source>
    </source>
</evidence>
<evidence type="ECO:0007744" key="28">
    <source>
    </source>
</evidence>
<evidence type="ECO:0007744" key="29">
    <source>
    </source>
</evidence>
<evidence type="ECO:0007744" key="30">
    <source>
    </source>
</evidence>
<evidence type="ECO:0007744" key="31">
    <source>
    </source>
</evidence>
<evidence type="ECO:0007744" key="32">
    <source>
    </source>
</evidence>
<evidence type="ECO:0007744" key="33">
    <source>
    </source>
</evidence>
<evidence type="ECO:0007744" key="34">
    <source>
    </source>
</evidence>
<evidence type="ECO:0007744" key="35">
    <source>
    </source>
</evidence>
<evidence type="ECO:0007744" key="36">
    <source>
    </source>
</evidence>
<evidence type="ECO:0007744" key="37">
    <source>
    </source>
</evidence>
<evidence type="ECO:0007744" key="38">
    <source>
    </source>
</evidence>
<evidence type="ECO:0007744" key="39">
    <source>
    </source>
</evidence>
<evidence type="ECO:0007744" key="40">
    <source>
    </source>
</evidence>
<evidence type="ECO:0007744" key="41">
    <source>
    </source>
</evidence>
<evidence type="ECO:0007744" key="42">
    <source>
    </source>
</evidence>
<evidence type="ECO:0007829" key="43">
    <source>
        <dbReference type="PDB" id="1TXP"/>
    </source>
</evidence>
<evidence type="ECO:0007829" key="44">
    <source>
        <dbReference type="PDB" id="1WF2"/>
    </source>
</evidence>
<evidence type="ECO:0007829" key="45">
    <source>
        <dbReference type="PDB" id="2MXY"/>
    </source>
</evidence>
<evidence type="ECO:0007829" key="46">
    <source>
        <dbReference type="PDB" id="2MZ1"/>
    </source>
</evidence>
<protein>
    <recommendedName>
        <fullName>Heterogeneous nuclear ribonucleoproteins C1/C2</fullName>
        <shortName>hnRNP C1/C2</shortName>
    </recommendedName>
</protein>
<sequence>MASNVTNKTDPRSMNSRVFIGNLNTLVVKKSDVEAIFSKYGKIVGCSVHKGFAFVQYVNERNARAAVAGEDGRMIAGQVLDINLAAEPKVNRGKAGVKRSAAEMYGSVTEHPSPSPLLSSSFDLDYDFQRDYYDRMYSYPARVPPPPPIARAVVPSKRQRVSGNTSRRGKSGFNSKSGQRGSSKSGKLKGDDLQAIKKELTQIKQKVDSLLENLEKIEKEQSKQAVEMKNDKSEEEQSSSSVKKDETNVKMESEGGADDSAEEGDLLDDDDNEDRGDDQLELIKDDEKEAEEGEDDRDSANGEDDS</sequence>
<name>HNRPC_HUMAN</name>
<feature type="initiator methionine" description="Removed" evidence="20 35">
    <location>
        <position position="1"/>
    </location>
</feature>
<feature type="chain" id="PRO_0000081844" description="Heterogeneous nuclear ribonucleoproteins C1/C2">
    <location>
        <begin position="2"/>
        <end position="306"/>
    </location>
</feature>
<feature type="domain" description="RRM" evidence="3">
    <location>
        <begin position="16"/>
        <end position="87"/>
    </location>
</feature>
<feature type="region of interest" description="Disordered" evidence="4">
    <location>
        <begin position="139"/>
        <end position="190"/>
    </location>
</feature>
<feature type="region of interest" description="Disordered" evidence="4">
    <location>
        <begin position="221"/>
        <end position="306"/>
    </location>
</feature>
<feature type="coiled-coil region" evidence="2">
    <location>
        <begin position="190"/>
        <end position="238"/>
    </location>
</feature>
<feature type="short sequence motif" description="Nuclear localization signal" evidence="2">
    <location>
        <begin position="155"/>
        <end position="161"/>
    </location>
</feature>
<feature type="compositionally biased region" description="Low complexity" evidence="4">
    <location>
        <begin position="175"/>
        <end position="185"/>
    </location>
</feature>
<feature type="compositionally biased region" description="Basic and acidic residues" evidence="4">
    <location>
        <begin position="221"/>
        <end position="232"/>
    </location>
</feature>
<feature type="compositionally biased region" description="Basic and acidic residues" evidence="4">
    <location>
        <begin position="242"/>
        <end position="253"/>
    </location>
</feature>
<feature type="compositionally biased region" description="Acidic residues" evidence="4">
    <location>
        <begin position="255"/>
        <end position="276"/>
    </location>
</feature>
<feature type="compositionally biased region" description="Basic and acidic residues" evidence="4">
    <location>
        <begin position="277"/>
        <end position="287"/>
    </location>
</feature>
<feature type="compositionally biased region" description="Acidic residues" evidence="4">
    <location>
        <begin position="288"/>
        <end position="306"/>
    </location>
</feature>
<feature type="modified residue" description="N-acetylalanine" evidence="20 35">
    <location>
        <position position="2"/>
    </location>
</feature>
<feature type="modified residue" description="Phosphothreonine" evidence="32">
    <location>
        <position position="109"/>
    </location>
</feature>
<feature type="modified residue" description="Phosphoserine" evidence="29 32">
    <location>
        <position position="113"/>
    </location>
</feature>
<feature type="modified residue" description="Phosphoserine" evidence="32 37">
    <location>
        <position position="115"/>
    </location>
</feature>
<feature type="modified residue" description="Phosphoserine" evidence="1">
    <location>
        <position position="121"/>
    </location>
</feature>
<feature type="modified residue" description="Phosphoserine" evidence="26">
    <location>
        <position position="162"/>
    </location>
</feature>
<feature type="modified residue" description="Phosphoserine" evidence="34">
    <location>
        <position position="166"/>
    </location>
</feature>
<feature type="modified residue" description="N6-acetyllysine; alternate" evidence="1">
    <location>
        <position position="176"/>
    </location>
</feature>
<feature type="modified residue" description="Phosphoserine" evidence="26 28 29 32 33 34 36 37">
    <location>
        <position position="233"/>
    </location>
</feature>
<feature type="modified residue" description="Phosphoserine" evidence="36 37">
    <location>
        <position position="238"/>
    </location>
</feature>
<feature type="modified residue" description="Phosphoserine" evidence="37">
    <location>
        <position position="239"/>
    </location>
</feature>
<feature type="modified residue" description="Phosphoserine" evidence="29 34 36">
    <location>
        <position position="241"/>
    </location>
</feature>
<feature type="modified residue" description="Phosphoserine" evidence="9 26 28 30 32 34 36 37">
    <location>
        <position position="253"/>
    </location>
</feature>
<feature type="modified residue" description="Phosphoserine" evidence="9 26 27 28 30 32 33 34 36 37">
    <location>
        <position position="260"/>
    </location>
</feature>
<feature type="modified residue" description="Phosphoserine" evidence="9 25 28 29 31 33 34">
    <location>
        <position position="299"/>
    </location>
</feature>
<feature type="modified residue" description="Phosphoserine" evidence="28 34">
    <location>
        <position position="306"/>
    </location>
</feature>
<feature type="cross-link" description="Glycyl lysine isopeptide (Lys-Gly) (interchain with G-Cter in SUMO2)" evidence="42">
    <location>
        <position position="8"/>
    </location>
</feature>
<feature type="cross-link" description="Glycyl lysine isopeptide (Lys-Gly) (interchain with G-Cter in SUMO2)" evidence="39 40 41 42">
    <location>
        <position position="50"/>
    </location>
</feature>
<feature type="cross-link" description="Glycyl lysine isopeptide (Lys-Gly) (interchain with G-Cter in SUMO2)" evidence="39 42">
    <location>
        <position position="89"/>
    </location>
</feature>
<feature type="cross-link" description="Glycyl lysine isopeptide (Lys-Gly) (interchain with G-Cter in SUMO2)" evidence="41">
    <location>
        <position position="94"/>
    </location>
</feature>
<feature type="cross-link" description="Glycyl lysine isopeptide (Lys-Gly) (interchain with G-Cter in SUMO2); alternate" evidence="39 40 42">
    <location>
        <position position="176"/>
    </location>
</feature>
<feature type="cross-link" description="Glycyl lysine isopeptide (Lys-Gly) (interchain with G-Cter in SUMO2)" evidence="40 42">
    <location>
        <position position="223"/>
    </location>
</feature>
<feature type="cross-link" description="Glycyl lysine isopeptide (Lys-Gly) (interchain with G-Cter in SUMO2)" evidence="38 39 40 41 42">
    <location>
        <position position="229"/>
    </location>
</feature>
<feature type="cross-link" description="Glycyl lysine isopeptide (Lys-Gly) (interchain with G-Cter in SUMO1); alternate" evidence="38">
    <location>
        <position position="232"/>
    </location>
</feature>
<feature type="cross-link" description="Glycyl lysine isopeptide (Lys-Gly) (interchain with G-Cter in SUMO2); alternate" evidence="39 40 41 42">
    <location>
        <position position="232"/>
    </location>
</feature>
<feature type="cross-link" description="Glycyl lysine isopeptide (Lys-Gly) (interchain with G-Cter in SUMO2)" evidence="39 40 41 42">
    <location>
        <position position="243"/>
    </location>
</feature>
<feature type="cross-link" description="Glycyl lysine isopeptide (Lys-Gly) (interchain with G-Cter in SUMO2)" evidence="40 41">
    <location>
        <position position="244"/>
    </location>
</feature>
<feature type="cross-link" description="Glycyl lysine isopeptide (Lys-Gly) (interchain with G-Cter in SUMO); alternate">
    <location>
        <position position="250"/>
    </location>
</feature>
<feature type="cross-link" description="Glycyl lysine isopeptide (Lys-Gly) (interchain with G-Cter in SUMO2); alternate" evidence="42">
    <location>
        <position position="250"/>
    </location>
</feature>
<feature type="splice variant" id="VSP_019225" description="In isoform 3." evidence="23">
    <original>KYGKIVGCSVHKGFAFVQYVNERNARAAVAGEDGRMIAGQVLDINLAAEPKVNRGKAGVKRSAAEMYGSVTEHPSPSPLLS</original>
    <variation>N</variation>
    <location>
        <begin position="39"/>
        <end position="119"/>
    </location>
</feature>
<feature type="splice variant" id="VSP_005831" description="In isoform C1 and isoform 4." evidence="21 22 23">
    <location>
        <begin position="108"/>
        <end position="120"/>
    </location>
</feature>
<feature type="splice variant" id="VSP_019226" description="In isoform 4." evidence="21">
    <location>
        <begin position="153"/>
        <end position="195"/>
    </location>
</feature>
<feature type="sequence variant" id="VAR_089339" description="In MRD74; uncertain significance." evidence="16">
    <original>R</original>
    <variation>W</variation>
    <location>
        <position position="64"/>
    </location>
</feature>
<feature type="sequence variant" id="VAR_089340" description="In MRD74; uncertain significance." evidence="16">
    <original>R</original>
    <variation>Q</variation>
    <location>
        <position position="99"/>
    </location>
</feature>
<feature type="sequence variant" id="VAR_089341" description="In MRD74; uncertain significance." evidence="16">
    <original>V</original>
    <variation>I</variation>
    <location>
        <position position="108"/>
    </location>
</feature>
<feature type="sequence variant" id="VAR_089342" description="In MRD74; likely pathogenic; decreased protein levels in patient-derived induced pluripotent stem cells; no effect on nuclear localization; no effect in tetramerization." evidence="16">
    <location>
        <begin position="297"/>
        <end position="305"/>
    </location>
</feature>
<feature type="mutagenesis site" description="No effect on sumoylation." evidence="10">
    <original>K</original>
    <variation>R</variation>
    <location>
        <position position="197"/>
    </location>
</feature>
<feature type="mutagenesis site" description="Loss of sumoylation." evidence="10">
    <original>K</original>
    <variation>R</variation>
    <location>
        <position position="250"/>
    </location>
</feature>
<feature type="sequence conflict" description="In Ref. 6; AAH08423." evidence="24" ref="6">
    <original>E</original>
    <variation>G</variation>
    <location>
        <position position="110"/>
    </location>
</feature>
<feature type="sequence conflict" description="In Ref. 1 and 2." evidence="24" ref="1 2">
    <original>I</original>
    <variation>M</variation>
    <location>
        <position position="217"/>
    </location>
</feature>
<feature type="sequence conflict" description="In Ref. 6; AAH08364." evidence="24" ref="6">
    <original>Q</original>
    <variation>R</variation>
    <location>
        <position position="224"/>
    </location>
</feature>
<feature type="sequence conflict" description="In Ref. 6; AAH08364." evidence="24" ref="6">
    <original>K</original>
    <variation>R</variation>
    <location>
        <position position="244"/>
    </location>
</feature>
<feature type="sequence conflict" description="In Ref. 6; AAH07052." evidence="24" ref="6">
    <original>E</original>
    <variation>G</variation>
    <location>
        <position position="254"/>
    </location>
</feature>
<feature type="sequence conflict" description="In Ref. 1 and 2." evidence="24" ref="1 2">
    <original>EDDS</original>
    <variation>G</variation>
    <location>
        <begin position="303"/>
        <end position="306"/>
    </location>
</feature>
<feature type="turn" evidence="45">
    <location>
        <begin position="11"/>
        <end position="13"/>
    </location>
</feature>
<feature type="strand" evidence="44">
    <location>
        <begin position="18"/>
        <end position="23"/>
    </location>
</feature>
<feature type="turn" evidence="44">
    <location>
        <begin position="25"/>
        <end position="27"/>
    </location>
</feature>
<feature type="helix" evidence="44">
    <location>
        <begin position="30"/>
        <end position="35"/>
    </location>
</feature>
<feature type="turn" evidence="46">
    <location>
        <begin position="38"/>
        <end position="40"/>
    </location>
</feature>
<feature type="strand" evidence="44">
    <location>
        <begin position="43"/>
        <end position="49"/>
    </location>
</feature>
<feature type="strand" evidence="44">
    <location>
        <begin position="51"/>
        <end position="59"/>
    </location>
</feature>
<feature type="helix" evidence="44">
    <location>
        <begin position="60"/>
        <end position="68"/>
    </location>
</feature>
<feature type="turn" evidence="44">
    <location>
        <begin position="69"/>
        <end position="72"/>
    </location>
</feature>
<feature type="strand" evidence="44">
    <location>
        <begin position="81"/>
        <end position="84"/>
    </location>
</feature>
<feature type="strand" evidence="45">
    <location>
        <begin position="94"/>
        <end position="96"/>
    </location>
</feature>
<feature type="helix" evidence="43">
    <location>
        <begin position="194"/>
        <end position="216"/>
    </location>
</feature>
<feature type="modified residue" description="Phosphoserine" evidence="29 34">
    <location sequence="P07910-2">
        <position position="107"/>
    </location>
</feature>
<feature type="modified residue" description="Phosphoserine" evidence="29">
    <location sequence="P07910-2">
        <position position="108"/>
    </location>
</feature>
<feature type="modified residue" description="Phosphoserine" evidence="29 34">
    <location sequence="P07910-4">
        <position position="107"/>
    </location>
</feature>
<feature type="modified residue" description="Phosphoserine" evidence="29">
    <location sequence="P07910-4">
        <position position="108"/>
    </location>
</feature>
<keyword id="KW-0002">3D-structure</keyword>
<keyword id="KW-0007">Acetylation</keyword>
<keyword id="KW-0025">Alternative splicing</keyword>
<keyword id="KW-0175">Coiled coil</keyword>
<keyword id="KW-0903">Direct protein sequencing</keyword>
<keyword id="KW-0225">Disease variant</keyword>
<keyword id="KW-0991">Intellectual disability</keyword>
<keyword id="KW-1017">Isopeptide bond</keyword>
<keyword id="KW-0507">mRNA processing</keyword>
<keyword id="KW-0508">mRNA splicing</keyword>
<keyword id="KW-0539">Nucleus</keyword>
<keyword id="KW-0597">Phosphoprotein</keyword>
<keyword id="KW-1267">Proteomics identification</keyword>
<keyword id="KW-1185">Reference proteome</keyword>
<keyword id="KW-0687">Ribonucleoprotein</keyword>
<keyword id="KW-0694">RNA-binding</keyword>
<keyword id="KW-0747">Spliceosome</keyword>
<keyword id="KW-0832">Ubl conjugation</keyword>
<reference key="1">
    <citation type="journal article" date="1989" name="Proc. Natl. Acad. Sci. U.S.A.">
        <title>Primary structures of the heterogeneous nuclear ribonucleoprotein A2, B1, and C2 proteins: a diversity of RNA binding proteins is generated by small peptide inserts.</title>
        <authorList>
            <person name="Burd C.G."/>
            <person name="Swanson M.S."/>
            <person name="Goerlach M."/>
            <person name="Dreyfuss G."/>
        </authorList>
    </citation>
    <scope>NUCLEOTIDE SEQUENCE [MRNA] (ISOFORM C2)</scope>
</reference>
<reference key="2">
    <citation type="journal article" date="1987" name="Mol. Cell. Biol.">
        <title>Primary structure of human nuclear ribonucleoprotein particle C proteins: conservation of sequence and domain structures in heterogeneous nuclear RNA, mRNA, and pre-rRNA-binding proteins.</title>
        <authorList>
            <person name="Swanson M.S."/>
            <person name="Nakagawa T.Y."/>
            <person name="Levan K."/>
            <person name="Dreyfuss G."/>
        </authorList>
    </citation>
    <scope>NUCLEOTIDE SEQUENCE [MRNA] (ISOFORM C1)</scope>
</reference>
<reference key="3">
    <citation type="submission" date="2003-02" db="EMBL/GenBank/DDBJ databases">
        <title>Full-length cDNA libraries and normalization.</title>
        <authorList>
            <person name="Li W.B."/>
            <person name="Gruber C."/>
            <person name="Jessee J."/>
            <person name="Polayes D."/>
        </authorList>
    </citation>
    <scope>NUCLEOTIDE SEQUENCE [LARGE SCALE MRNA] (ISOFORMS C1 AND 3)</scope>
    <source>
        <tissue>Neuroblastoma</tissue>
        <tissue>Placenta</tissue>
    </source>
</reference>
<reference key="4">
    <citation type="submission" date="2005-03" db="EMBL/GenBank/DDBJ databases">
        <authorList>
            <person name="Totoki Y."/>
            <person name="Toyoda A."/>
            <person name="Takeda T."/>
            <person name="Sakaki Y."/>
            <person name="Tanaka A."/>
            <person name="Yokoyama S."/>
            <person name="Ohara O."/>
            <person name="Nagase T."/>
            <person name="Kikuno R.F."/>
        </authorList>
    </citation>
    <scope>NUCLEOTIDE SEQUENCE [LARGE SCALE MRNA] (ISOFORM C2)</scope>
    <source>
        <tissue>Brain</tissue>
    </source>
</reference>
<reference key="5">
    <citation type="submission" date="2005-09" db="EMBL/GenBank/DDBJ databases">
        <authorList>
            <person name="Mural R.J."/>
            <person name="Istrail S."/>
            <person name="Sutton G.G."/>
            <person name="Florea L."/>
            <person name="Halpern A.L."/>
            <person name="Mobarry C.M."/>
            <person name="Lippert R."/>
            <person name="Walenz B."/>
            <person name="Shatkay H."/>
            <person name="Dew I."/>
            <person name="Miller J.R."/>
            <person name="Flanigan M.J."/>
            <person name="Edwards N.J."/>
            <person name="Bolanos R."/>
            <person name="Fasulo D."/>
            <person name="Halldorsson B.V."/>
            <person name="Hannenhalli S."/>
            <person name="Turner R."/>
            <person name="Yooseph S."/>
            <person name="Lu F."/>
            <person name="Nusskern D.R."/>
            <person name="Shue B.C."/>
            <person name="Zheng X.H."/>
            <person name="Zhong F."/>
            <person name="Delcher A.L."/>
            <person name="Huson D.H."/>
            <person name="Kravitz S.A."/>
            <person name="Mouchard L."/>
            <person name="Reinert K."/>
            <person name="Remington K.A."/>
            <person name="Clark A.G."/>
            <person name="Waterman M.S."/>
            <person name="Eichler E.E."/>
            <person name="Adams M.D."/>
            <person name="Hunkapiller M.W."/>
            <person name="Myers E.W."/>
            <person name="Venter J.C."/>
        </authorList>
    </citation>
    <scope>NUCLEOTIDE SEQUENCE [LARGE SCALE GENOMIC DNA]</scope>
</reference>
<reference key="6">
    <citation type="journal article" date="2004" name="Genome Res.">
        <title>The status, quality, and expansion of the NIH full-length cDNA project: the Mammalian Gene Collection (MGC).</title>
        <authorList>
            <consortium name="The MGC Project Team"/>
        </authorList>
    </citation>
    <scope>NUCLEOTIDE SEQUENCE [LARGE SCALE MRNA] (ISOFORMS C1; C2 AND 4)</scope>
    <source>
        <tissue>Bone marrow</tissue>
        <tissue>Brain</tissue>
        <tissue>Chondrosarcoma</tissue>
        <tissue>Eye</tissue>
        <tissue>Placenta</tissue>
    </source>
</reference>
<reference key="7">
    <citation type="submission" date="2008-02" db="UniProtKB">
        <authorList>
            <person name="Bienvenut W.V."/>
            <person name="Matallanas D."/>
            <person name="Cooper W.N."/>
            <person name="Calvo F."/>
            <person name="Kolch W."/>
        </authorList>
    </citation>
    <scope>PROTEIN SEQUENCE OF 2-12; 18-39; 43-61; 74-89; 143-151; 188-198 AND 205-216</scope>
    <scope>CLEAVAGE OF INITIATOR METHIONINE</scope>
    <scope>ACETYLATION AT ALA-2</scope>
    <scope>IDENTIFICATION BY MASS SPECTROMETRY</scope>
    <source>
        <tissue>Cervix carcinoma</tissue>
        <tissue>Mammary carcinoma</tissue>
    </source>
</reference>
<reference key="8">
    <citation type="submission" date="2008-12" db="UniProtKB">
        <authorList>
            <person name="Lubec G."/>
            <person name="Vishwanath V."/>
            <person name="Chen W.-Q."/>
            <person name="Sun Y."/>
        </authorList>
    </citation>
    <scope>PROTEIN SEQUENCE OF 18-39; 51-61; 74-89 AND 207-216</scope>
    <scope>IDENTIFICATION BY MASS SPECTROMETRY</scope>
    <source>
        <tissue>Brain</tissue>
        <tissue>Cajal-Retzius cell</tissue>
        <tissue>Fetal brain cortex</tissue>
    </source>
</reference>
<reference key="9">
    <citation type="journal article" date="1989" name="Nucleic Acids Res.">
        <title>Primary structure differences between proteins C1 and C2 of HeLa 40S nuclear ribonucleoprotein particles.</title>
        <authorList>
            <person name="Merrill B.M."/>
            <person name="Barnett S.F."/>
            <person name="Lestourgeon W.M."/>
            <person name="Williams K.R."/>
        </authorList>
    </citation>
    <scope>PARTIAL PROTEIN SEQUENCE</scope>
    <scope>ALTERNATIVE SPLICING</scope>
    <scope>CHARACTERIZATION</scope>
</reference>
<reference key="10">
    <citation type="journal article" date="1994" name="Mol. Cell. Biol.">
        <title>The C-protein tetramer binds 230 to 240 nucleotides of pre-mRNA and nucleates the assembly of 40S heterogeneous nuclear ribonucleoprotein particles.</title>
        <authorList>
            <person name="Huang M."/>
            <person name="Rech J.E."/>
            <person name="Northington S.J."/>
            <person name="Flicker P.F."/>
            <person name="Mayeda A."/>
            <person name="Krainer A.R."/>
            <person name="LeStourgeon W.M."/>
        </authorList>
    </citation>
    <scope>FUNCTION</scope>
    <scope>SUBUNIT</scope>
</reference>
<reference key="11">
    <citation type="journal article" date="1995" name="Nucleic Acids Res.">
        <title>A T to G mutation in the polypyrimidine tract of the second intron of the human beta-globin gene reduces in vitro splicing efficiency: evidence for an increased hnRNP C interaction.</title>
        <authorList>
            <person name="Sebillon P."/>
            <person name="Beldjord C."/>
            <person name="Kaplan J.-C."/>
            <person name="Brody E."/>
            <person name="Marie J."/>
        </authorList>
    </citation>
    <scope>FUNCTION</scope>
</reference>
<reference key="12">
    <citation type="journal article" date="2002" name="J. Biol. Chem.">
        <title>Nuclear DNA helicase II/RNA helicase A binds to filamentous actin.</title>
        <authorList>
            <person name="Zhang S."/>
            <person name="Buder K."/>
            <person name="Burkhardt C."/>
            <person name="Schlott B."/>
            <person name="Goerlach M."/>
            <person name="Grosse F."/>
        </authorList>
    </citation>
    <scope>INTERACTION WITH DHX9</scope>
</reference>
<reference key="13">
    <citation type="journal article" date="2002" name="RNA">
        <title>Purification and characterization of native spliceosomes suitable for three-dimensional structural analysis.</title>
        <authorList>
            <person name="Jurica M.S."/>
            <person name="Licklider L.J."/>
            <person name="Gygi S.P."/>
            <person name="Grigorieff N."/>
            <person name="Moore M.J."/>
        </authorList>
    </citation>
    <scope>IDENTIFICATION BY MASS SPECTROMETRY</scope>
    <scope>IDENTIFICATION IN THE SPLICEOSOMAL C COMPLEX</scope>
</reference>
<reference key="14">
    <citation type="journal article" date="2003" name="Biochemistry">
        <title>Basal and hydrogen peroxide stimulated sites of phosphorylation in heterogeneous nuclear ribonucleoprotein C1/C2.</title>
        <authorList>
            <person name="Stone J.R."/>
            <person name="Maki J.L."/>
            <person name="Collins T."/>
        </authorList>
    </citation>
    <scope>PHOSPHORYLATION AT SER-253; SER-260 AND SER-299</scope>
    <scope>IDENTIFICATION BY MASS SPECTROMETRY</scope>
</reference>
<reference key="15">
    <citation type="journal article" date="2003" name="Mol. Cell. Biol.">
        <title>Heterogeneous nuclear ribonucleoprotein C modulates translation of c-myc mRNA in a cell cycle phase-dependent manner.</title>
        <authorList>
            <person name="Kim J.H."/>
            <person name="Paek K.Y."/>
            <person name="Choi K."/>
            <person name="Kim T.-D."/>
            <person name="Hahm B."/>
            <person name="Kim K.-T."/>
            <person name="Jang S.K."/>
        </authorList>
    </citation>
    <scope>FUNCTION</scope>
</reference>
<reference key="16">
    <citation type="journal article" date="2003" name="Nature">
        <title>Proteomic characterization of the human centrosome by protein correlation profiling.</title>
        <authorList>
            <person name="Andersen J.S."/>
            <person name="Wilkinson C.J."/>
            <person name="Mayor T."/>
            <person name="Mortensen P."/>
            <person name="Nigg E.A."/>
            <person name="Mann M."/>
        </authorList>
    </citation>
    <scope>IDENTIFICATION BY MASS SPECTROMETRY</scope>
    <source>
        <tissue>Lymphoblast</tissue>
    </source>
</reference>
<reference key="17">
    <citation type="journal article" date="2004" name="Mol. Cell. Biol.">
        <title>SUMO modification of heterogeneous nuclear ribonucleoproteins.</title>
        <authorList>
            <person name="Vassileva M.T."/>
            <person name="Matunis M.J."/>
        </authorList>
    </citation>
    <scope>MUTAGENESIS OF LYS-197 AND LYS-250</scope>
    <scope>SUMOYLATION AT LYS-250</scope>
</reference>
<reference key="18">
    <citation type="journal article" date="2005" name="Mol. Cell. Biochem.">
        <title>Regulation of urokinase receptor mRNA stability by hnRNP C in lung epithelial cells.</title>
        <authorList>
            <person name="Shetty S."/>
        </authorList>
    </citation>
    <scope>FUNCTION</scope>
</reference>
<reference key="19">
    <citation type="journal article" date="2006" name="Cell">
        <title>Global, in vivo, and site-specific phosphorylation dynamics in signaling networks.</title>
        <authorList>
            <person name="Olsen J.V."/>
            <person name="Blagoev B."/>
            <person name="Gnad F."/>
            <person name="Macek B."/>
            <person name="Kumar C."/>
            <person name="Mortensen P."/>
            <person name="Mann M."/>
        </authorList>
    </citation>
    <scope>PHOSPHORYLATION [LARGE SCALE ANALYSIS] AT SER-162; SER-233; SER-253 AND SER-260</scope>
    <scope>IDENTIFICATION BY MASS SPECTROMETRY [LARGE SCALE ANALYSIS]</scope>
    <source>
        <tissue>Cervix carcinoma</tissue>
    </source>
</reference>
<reference key="20">
    <citation type="journal article" date="2006" name="Pituitary">
        <title>Phosphoproteomic analysis of the human pituitary.</title>
        <authorList>
            <person name="Beranova-Giorgianni S."/>
            <person name="Zhao Y."/>
            <person name="Desiderio D.M."/>
            <person name="Giorgianni F."/>
        </authorList>
    </citation>
    <scope>PHOSPHORYLATION [LARGE SCALE ANALYSIS] AT SER-299</scope>
    <scope>IDENTIFICATION BY MASS SPECTROMETRY [LARGE SCALE ANALYSIS]</scope>
    <source>
        <tissue>Pituitary</tissue>
    </source>
</reference>
<reference key="21">
    <citation type="journal article" date="2007" name="Mol. Cell. Proteomics">
        <title>Quantitative phosphoproteome profiling of Wnt3a-mediated signaling network: indicating the involvement of ribonucleoside-diphosphate reductase M2 subunit phosphorylation at residue serine 20 in canonical Wnt signal transduction.</title>
        <authorList>
            <person name="Tang L.-Y."/>
            <person name="Deng N."/>
            <person name="Wang L.-S."/>
            <person name="Dai J."/>
            <person name="Wang Z.-L."/>
            <person name="Jiang X.-S."/>
            <person name="Li S.-J."/>
            <person name="Li L."/>
            <person name="Sheng Q.-H."/>
            <person name="Wu D.-Q."/>
            <person name="Li L."/>
            <person name="Zeng R."/>
        </authorList>
    </citation>
    <scope>PHOSPHORYLATION [LARGE SCALE ANALYSIS] AT SER-260</scope>
    <scope>IDENTIFICATION BY MASS SPECTROMETRY [LARGE SCALE ANALYSIS]</scope>
    <source>
        <tissue>Embryonic kidney</tissue>
    </source>
</reference>
<reference key="22">
    <citation type="journal article" date="2007" name="Mol. Cell. Proteomics">
        <title>Molecular composition of IMP1 ribonucleoprotein granules.</title>
        <authorList>
            <person name="Joeson L."/>
            <person name="Vikesaa J."/>
            <person name="Krogh A."/>
            <person name="Nielsen L.K."/>
            <person name="Hansen T."/>
            <person name="Borup R."/>
            <person name="Johnsen A.H."/>
            <person name="Christiansen J."/>
            <person name="Nielsen F.C."/>
        </authorList>
    </citation>
    <scope>INTERACTION WITH IGF2BP1</scope>
</reference>
<reference key="23">
    <citation type="journal article" date="2008" name="J. Proteome Res.">
        <title>Phosphorylation analysis of primary human T lymphocytes using sequential IMAC and titanium oxide enrichment.</title>
        <authorList>
            <person name="Carrascal M."/>
            <person name="Ovelleiro D."/>
            <person name="Casas V."/>
            <person name="Gay M."/>
            <person name="Abian J."/>
        </authorList>
    </citation>
    <scope>PHOSPHORYLATION [LARGE SCALE ANALYSIS] AT SER-299</scope>
    <scope>IDENTIFICATION BY MASS SPECTROMETRY [LARGE SCALE ANALYSIS]</scope>
    <source>
        <tissue>T-cell</tissue>
    </source>
</reference>
<reference key="24">
    <citation type="journal article" date="2008" name="Mol. Cell">
        <title>Kinase-selective enrichment enables quantitative phosphoproteomics of the kinome across the cell cycle.</title>
        <authorList>
            <person name="Daub H."/>
            <person name="Olsen J.V."/>
            <person name="Bairlein M."/>
            <person name="Gnad F."/>
            <person name="Oppermann F.S."/>
            <person name="Korner R."/>
            <person name="Greff Z."/>
            <person name="Keri G."/>
            <person name="Stemmann O."/>
            <person name="Mann M."/>
        </authorList>
    </citation>
    <scope>PHOSPHORYLATION [LARGE SCALE ANALYSIS] AT SER-253 AND SER-260</scope>
    <scope>IDENTIFICATION BY MASS SPECTROMETRY [LARGE SCALE ANALYSIS]</scope>
    <source>
        <tissue>Cervix carcinoma</tissue>
    </source>
</reference>
<reference key="25">
    <citation type="journal article" date="2008" name="Proc. Natl. Acad. Sci. U.S.A.">
        <title>A quantitative atlas of mitotic phosphorylation.</title>
        <authorList>
            <person name="Dephoure N."/>
            <person name="Zhou C."/>
            <person name="Villen J."/>
            <person name="Beausoleil S.A."/>
            <person name="Bakalarski C.E."/>
            <person name="Elledge S.J."/>
            <person name="Gygi S.P."/>
        </authorList>
    </citation>
    <scope>PHOSPHORYLATION [LARGE SCALE ANALYSIS] AT SER-113; SER-233; SER-241 AND SER-299</scope>
    <scope>PHOSPHORYLATION [LARGE SCALE ANALYSIS] AT SER-107 AND SER-108 (ISOFORMS 4 AND C1)</scope>
    <scope>IDENTIFICATION BY MASS SPECTROMETRY [LARGE SCALE ANALYSIS]</scope>
    <source>
        <tissue>Cervix carcinoma</tissue>
    </source>
</reference>
<reference key="26">
    <citation type="journal article" date="2008" name="Proteomics">
        <title>Large-scale phosphoproteome analysis of human liver tissue by enrichment and fractionation of phosphopeptides with strong anion exchange chromatography.</title>
        <authorList>
            <person name="Han G."/>
            <person name="Ye M."/>
            <person name="Zhou H."/>
            <person name="Jiang X."/>
            <person name="Feng S."/>
            <person name="Jiang X."/>
            <person name="Tian R."/>
            <person name="Wan D."/>
            <person name="Zou H."/>
            <person name="Gu J."/>
        </authorList>
    </citation>
    <scope>PHOSPHORYLATION [LARGE SCALE ANALYSIS] AT SER-233; SER-253; SER-260; SER-299 AND SER-306</scope>
    <scope>IDENTIFICATION BY MASS SPECTROMETRY [LARGE SCALE ANALYSIS]</scope>
    <source>
        <tissue>Liver</tissue>
    </source>
</reference>
<reference key="27">
    <citation type="journal article" date="2009" name="Anal. Chem.">
        <title>Lys-N and trypsin cover complementary parts of the phosphoproteome in a refined SCX-based approach.</title>
        <authorList>
            <person name="Gauci S."/>
            <person name="Helbig A.O."/>
            <person name="Slijper M."/>
            <person name="Krijgsveld J."/>
            <person name="Heck A.J."/>
            <person name="Mohammed S."/>
        </authorList>
    </citation>
    <scope>IDENTIFICATION BY MASS SPECTROMETRY [LARGE SCALE ANALYSIS]</scope>
</reference>
<reference key="28">
    <citation type="journal article" date="2009" name="Sci. Signal.">
        <title>Quantitative phosphoproteomic analysis of T cell receptor signaling reveals system-wide modulation of protein-protein interactions.</title>
        <authorList>
            <person name="Mayya V."/>
            <person name="Lundgren D.H."/>
            <person name="Hwang S.-I."/>
            <person name="Rezaul K."/>
            <person name="Wu L."/>
            <person name="Eng J.K."/>
            <person name="Rodionov V."/>
            <person name="Han D.K."/>
        </authorList>
    </citation>
    <scope>PHOSPHORYLATION [LARGE SCALE ANALYSIS] AT THR-109; SER-113; SER-115; SER-233; SER-253 AND SER-260</scope>
    <scope>IDENTIFICATION BY MASS SPECTROMETRY [LARGE SCALE ANALYSIS]</scope>
    <source>
        <tissue>Leukemic T-cell</tissue>
    </source>
</reference>
<reference key="29">
    <citation type="journal article" date="2010" name="Sci. Signal.">
        <title>Quantitative phosphoproteomics reveals widespread full phosphorylation site occupancy during mitosis.</title>
        <authorList>
            <person name="Olsen J.V."/>
            <person name="Vermeulen M."/>
            <person name="Santamaria A."/>
            <person name="Kumar C."/>
            <person name="Miller M.L."/>
            <person name="Jensen L.J."/>
            <person name="Gnad F."/>
            <person name="Cox J."/>
            <person name="Jensen T.S."/>
            <person name="Nigg E.A."/>
            <person name="Brunak S."/>
            <person name="Mann M."/>
        </authorList>
    </citation>
    <scope>PHOSPHORYLATION [LARGE SCALE ANALYSIS] AT SER-233; SER-260 AND SER-299</scope>
    <scope>IDENTIFICATION BY MASS SPECTROMETRY [LARGE SCALE ANALYSIS]</scope>
    <source>
        <tissue>Cervix carcinoma</tissue>
    </source>
</reference>
<reference key="30">
    <citation type="journal article" date="2011" name="BMC Syst. Biol.">
        <title>Initial characterization of the human central proteome.</title>
        <authorList>
            <person name="Burkard T.R."/>
            <person name="Planyavsky M."/>
            <person name="Kaupe I."/>
            <person name="Breitwieser F.P."/>
            <person name="Buerckstuemmer T."/>
            <person name="Bennett K.L."/>
            <person name="Superti-Furga G."/>
            <person name="Colinge J."/>
        </authorList>
    </citation>
    <scope>IDENTIFICATION BY MASS SPECTROMETRY [LARGE SCALE ANALYSIS]</scope>
</reference>
<reference key="31">
    <citation type="journal article" date="2011" name="Sci. Signal.">
        <title>System-wide temporal characterization of the proteome and phosphoproteome of human embryonic stem cell differentiation.</title>
        <authorList>
            <person name="Rigbolt K.T."/>
            <person name="Prokhorova T.A."/>
            <person name="Akimov V."/>
            <person name="Henningsen J."/>
            <person name="Johansen P.T."/>
            <person name="Kratchmarova I."/>
            <person name="Kassem M."/>
            <person name="Mann M."/>
            <person name="Olsen J.V."/>
            <person name="Blagoev B."/>
        </authorList>
    </citation>
    <scope>PHOSPHORYLATION [LARGE SCALE ANALYSIS] AT SER-166; SER-233; SER-241; SER-253; SER-260; SER-299 AND SER-306</scope>
    <scope>PHOSPHORYLATION [LARGE SCALE ANALYSIS] AT SER-107 (ISOFORMS 4 AND C1)</scope>
    <scope>IDENTIFICATION BY MASS SPECTROMETRY [LARGE SCALE ANALYSIS]</scope>
</reference>
<reference key="32">
    <citation type="journal article" date="2012" name="Proc. Natl. Acad. Sci. U.S.A.">
        <title>N-terminal acetylome analyses and functional insights of the N-terminal acetyltransferase NatB.</title>
        <authorList>
            <person name="Van Damme P."/>
            <person name="Lasa M."/>
            <person name="Polevoda B."/>
            <person name="Gazquez C."/>
            <person name="Elosegui-Artola A."/>
            <person name="Kim D.S."/>
            <person name="De Juan-Pardo E."/>
            <person name="Demeyer K."/>
            <person name="Hole K."/>
            <person name="Larrea E."/>
            <person name="Timmerman E."/>
            <person name="Prieto J."/>
            <person name="Arnesen T."/>
            <person name="Sherman F."/>
            <person name="Gevaert K."/>
            <person name="Aldabe R."/>
        </authorList>
    </citation>
    <scope>ACETYLATION [LARGE SCALE ANALYSIS] AT ALA-2</scope>
    <scope>CLEAVAGE OF INITIATOR METHIONINE [LARGE SCALE ANALYSIS]</scope>
    <scope>IDENTIFICATION BY MASS SPECTROMETRY [LARGE SCALE ANALYSIS]</scope>
</reference>
<reference key="33">
    <citation type="journal article" date="2013" name="J. Proteome Res.">
        <title>Toward a comprehensive characterization of a human cancer cell phosphoproteome.</title>
        <authorList>
            <person name="Zhou H."/>
            <person name="Di Palma S."/>
            <person name="Preisinger C."/>
            <person name="Peng M."/>
            <person name="Polat A.N."/>
            <person name="Heck A.J."/>
            <person name="Mohammed S."/>
        </authorList>
    </citation>
    <scope>PHOSPHORYLATION [LARGE SCALE ANALYSIS] AT SER-233; SER-238; SER-241; SER-253 AND SER-260</scope>
    <scope>IDENTIFICATION BY MASS SPECTROMETRY [LARGE SCALE ANALYSIS]</scope>
    <source>
        <tissue>Cervix carcinoma</tissue>
        <tissue>Erythroleukemia</tissue>
    </source>
</reference>
<reference key="34">
    <citation type="journal article" date="2014" name="J. Proteomics">
        <title>An enzyme assisted RP-RPLC approach for in-depth analysis of human liver phosphoproteome.</title>
        <authorList>
            <person name="Bian Y."/>
            <person name="Song C."/>
            <person name="Cheng K."/>
            <person name="Dong M."/>
            <person name="Wang F."/>
            <person name="Huang J."/>
            <person name="Sun D."/>
            <person name="Wang L."/>
            <person name="Ye M."/>
            <person name="Zou H."/>
        </authorList>
    </citation>
    <scope>PHOSPHORYLATION [LARGE SCALE ANALYSIS] AT SER-115; SER-233; SER-238; SER-239; SER-253 AND SER-260</scope>
    <scope>IDENTIFICATION BY MASS SPECTROMETRY [LARGE SCALE ANALYSIS]</scope>
    <source>
        <tissue>Liver</tissue>
    </source>
</reference>
<reference key="35">
    <citation type="journal article" date="2014" name="Nat. Struct. Mol. Biol.">
        <title>Uncovering global SUMOylation signaling networks in a site-specific manner.</title>
        <authorList>
            <person name="Hendriks I.A."/>
            <person name="D'Souza R.C."/>
            <person name="Yang B."/>
            <person name="Verlaan-de Vries M."/>
            <person name="Mann M."/>
            <person name="Vertegaal A.C."/>
        </authorList>
    </citation>
    <scope>SUMOYLATION [LARGE SCALE ANALYSIS] AT LYS-50; LYS-89; LYS-176; LYS-229; LYS-232 AND LYS-243</scope>
    <scope>IDENTIFICATION BY MASS SPECTROMETRY [LARGE SCALE ANALYSIS]</scope>
</reference>
<reference key="36">
    <citation type="journal article" date="2014" name="Proc. Natl. Acad. Sci. U.S.A.">
        <title>Mapping of SUMO sites and analysis of SUMOylation changes induced by external stimuli.</title>
        <authorList>
            <person name="Impens F."/>
            <person name="Radoshevich L."/>
            <person name="Cossart P."/>
            <person name="Ribet D."/>
        </authorList>
    </citation>
    <scope>SUMOYLATION [LARGE SCALE ANALYSIS] AT LYS-229 AND LYS-232</scope>
    <scope>IDENTIFICATION BY MASS SPECTROMETRY [LARGE SCALE ANALYSIS]</scope>
</reference>
<reference key="37">
    <citation type="journal article" date="2015" name="Brain">
        <title>Peptidylprolyl isomerase A governs TARDBP function and assembly in heterogeneous nuclear ribonucleoprotein complexes.</title>
        <authorList>
            <person name="Lauranzano E."/>
            <person name="Pozzi S."/>
            <person name="Pasetto L."/>
            <person name="Stucchi R."/>
            <person name="Massignan T."/>
            <person name="Paolella K."/>
            <person name="Mombrini M."/>
            <person name="Nardo G."/>
            <person name="Lunetta C."/>
            <person name="Corbo M."/>
            <person name="Mora G."/>
            <person name="Bendotti C."/>
            <person name="Bonetto V."/>
        </authorList>
    </citation>
    <scope>INTERACTION WITH PPIA</scope>
</reference>
<reference key="38">
    <citation type="journal article" date="2015" name="Cell Rep.">
        <title>SUMO-2 orchestrates chromatin modifiers in response to DNA damage.</title>
        <authorList>
            <person name="Hendriks I.A."/>
            <person name="Treffers L.W."/>
            <person name="Verlaan-de Vries M."/>
            <person name="Olsen J.V."/>
            <person name="Vertegaal A.C."/>
        </authorList>
    </citation>
    <scope>SUMOYLATION [LARGE SCALE ANALYSIS] AT LYS-50; LYS-94; LYS-229; LYS-232; LYS-243 AND LYS-244</scope>
    <scope>IDENTIFICATION BY MASS SPECTROMETRY [LARGE SCALE ANALYSIS]</scope>
</reference>
<reference key="39">
    <citation type="journal article" date="2015" name="Mol. Cell. Proteomics">
        <title>System-wide analysis of SUMOylation dynamics in response to replication stress reveals novel small ubiquitin-like modified target proteins and acceptor lysines relevant for genome stability.</title>
        <authorList>
            <person name="Xiao Z."/>
            <person name="Chang J.G."/>
            <person name="Hendriks I.A."/>
            <person name="Sigurdsson J.O."/>
            <person name="Olsen J.V."/>
            <person name="Vertegaal A.C."/>
        </authorList>
    </citation>
    <scope>SUMOYLATION [LARGE SCALE ANALYSIS] AT LYS-50; LYS-176; LYS-223; LYS-229; LYS-232; LYS-243 AND LYS-244</scope>
    <scope>IDENTIFICATION BY MASS SPECTROMETRY [LARGE SCALE ANALYSIS]</scope>
</reference>
<reference key="40">
    <citation type="journal article" date="2015" name="Nature">
        <title>N(6)-methyladenosine-dependent RNA structural switches regulate RNA-protein interactions.</title>
        <authorList>
            <person name="Liu N."/>
            <person name="Dai Q."/>
            <person name="Zheng G."/>
            <person name="He C."/>
            <person name="Parisien M."/>
            <person name="Pan T."/>
        </authorList>
    </citation>
    <scope>FUNCTION</scope>
    <scope>RNA-BINDING</scope>
</reference>
<reference key="41">
    <citation type="journal article" date="2015" name="Proteomics">
        <title>N-terminome analysis of the human mitochondrial proteome.</title>
        <authorList>
            <person name="Vaca Jacome A.S."/>
            <person name="Rabilloud T."/>
            <person name="Schaeffer-Reiss C."/>
            <person name="Rompais M."/>
            <person name="Ayoub D."/>
            <person name="Lane L."/>
            <person name="Bairoch A."/>
            <person name="Van Dorsselaer A."/>
            <person name="Carapito C."/>
        </authorList>
    </citation>
    <scope>IDENTIFICATION BY MASS SPECTROMETRY [LARGE SCALE ANALYSIS]</scope>
</reference>
<reference key="42">
    <citation type="journal article" date="2017" name="Nat. Struct. Mol. Biol.">
        <title>Site-specific mapping of the human SUMO proteome reveals co-modification with phosphorylation.</title>
        <authorList>
            <person name="Hendriks I.A."/>
            <person name="Lyon D."/>
            <person name="Young C."/>
            <person name="Jensen L.J."/>
            <person name="Vertegaal A.C."/>
            <person name="Nielsen M.L."/>
        </authorList>
    </citation>
    <scope>SUMOYLATION [LARGE SCALE ANALYSIS] AT LYS-8; LYS-50; LYS-89; LYS-176; LYS-223; LYS-229; LYS-232; LYS-243 AND LYS-250</scope>
    <scope>IDENTIFICATION BY MASS SPECTROMETRY [LARGE SCALE ANALYSIS]</scope>
</reference>
<reference key="43">
    <citation type="journal article" date="2023" name="Cancer Biol. Ther.">
        <title>Nucleo-cytoplasmic shuttling of 14-3-3 epsilon carrying hnRNP C promotes autophagy.</title>
        <authorList>
            <person name="Guo M."/>
            <person name="He M."/>
            <person name="Zhang Y."/>
            <person name="Liu W."/>
            <person name="Qi M."/>
            <person name="Liu Z."/>
            <person name="Yi G."/>
            <person name="Deng S."/>
            <person name="Li Y."/>
            <person name="Sun X."/>
            <person name="Zhao L."/>
            <person name="Chen T."/>
            <person name="Liu Y."/>
        </authorList>
    </citation>
    <scope>INTERACTION WITH YWHAE</scope>
    <scope>SUBCELLULAR LOCATION</scope>
    <scope>UBIQUITINATION</scope>
</reference>
<reference key="44">
    <citation type="journal article" date="1992" name="Biochemistry">
        <title>1H, 13C, and 15N NMR assignments and global folding pattern of the RNA-binding domain of the human hnRNP C proteins.</title>
        <authorList>
            <person name="Witteking M."/>
            <person name="Goerlach M."/>
            <person name="Friedrichs M."/>
            <person name="Dreyfuss G."/>
            <person name="Mueller L."/>
        </authorList>
    </citation>
    <scope>STRUCTURE BY NMR OF 1-94</scope>
</reference>
<reference key="45">
    <citation type="journal article" date="1992" name="EMBO J.">
        <title>Interaction of the RNA-binding domain of the hnRNP C proteins with RNA.</title>
        <authorList>
            <person name="Goerlach M."/>
            <person name="Witteking M."/>
            <person name="Beckman R.A."/>
            <person name="Mueller L."/>
            <person name="Dreyfuss G."/>
        </authorList>
    </citation>
    <scope>STRUCTURE BY NMR OF 1-94</scope>
</reference>
<reference key="46">
    <citation type="journal article" date="2001" name="J. Mol. Biol.">
        <title>An antiparallel four-helix bundle orients the high-affinity RNA binding sites in hnRNP C: a mechanism for RNA chaperonin activity.</title>
        <authorList>
            <person name="Shahied L."/>
            <person name="Braswell E.H."/>
            <person name="LeStourgeon W.M."/>
            <person name="Krezel A.M."/>
        </authorList>
    </citation>
    <scope>STRUCTURE BY NMR OF 193-220</scope>
    <scope>SUBUNIT</scope>
</reference>
<reference key="47">
    <citation type="submission" date="2004-11" db="PDB data bank">
        <title>Solution structure of RRM domain in HNRPC protein.</title>
        <authorList>
            <consortium name="RIKEN structural genomics initiative (RSGI)"/>
        </authorList>
    </citation>
    <scope>STRUCTURE BY NMR OF 8-92</scope>
</reference>
<reference key="48">
    <citation type="journal article" date="2005" name="J. Mol. Biol.">
        <title>Solution structure of the symmetric coiled coil tetramer formed by the oligomerization domain of hnRNP C: implications for biological function.</title>
        <authorList>
            <person name="Whitson S.R."/>
            <person name="LeStourgeon W.M."/>
            <person name="Krezel A.M."/>
        </authorList>
    </citation>
    <scope>STRUCTURE BY NMR OF 193-220</scope>
    <scope>SUBUNIT</scope>
</reference>
<reference key="49">
    <citation type="journal article" date="2023" name="Am. J. Hum. Genet.">
        <title>HNRNPC haploinsufficiency affects alternative splicing of intellectual disability-associated genes and causes a neurodevelopmental disorder.</title>
        <authorList>
            <consortium name="Genomics England Research Consortium"/>
            <consortium name="Undiagnosed Diseases Network"/>
            <person name="Niggl E."/>
            <person name="Bouman A."/>
            <person name="Briere L.C."/>
            <person name="Hoogenboezem R.M."/>
            <person name="Wallaard I."/>
            <person name="Park J."/>
            <person name="Admard J."/>
            <person name="Wilke M."/>
            <person name="Harris-Mostert E.D.R.O."/>
            <person name="Elgersma M."/>
            <person name="Bain J."/>
            <person name="Balasubramanian M."/>
            <person name="Banka S."/>
            <person name="Benke P.J."/>
            <person name="Bertrand M."/>
            <person name="Blesson A.E."/>
            <person name="Clayton-Smith J."/>
            <person name="Ellingford J.M."/>
            <person name="Gillentine M.A."/>
            <person name="Goodloe D.H."/>
            <person name="Haack T.B."/>
            <person name="Jain M."/>
            <person name="Krantz I."/>
            <person name="Luu S.M."/>
            <person name="McPheron M."/>
            <person name="Muss C.L."/>
            <person name="Raible S.E."/>
            <person name="Robin N.H."/>
            <person name="Spiller M."/>
            <person name="Starling S."/>
            <person name="Sweetser D.A."/>
            <person name="Thiffault I."/>
            <person name="Vetrini F."/>
            <person name="Witt D."/>
            <person name="Woods E."/>
            <person name="Zhou D."/>
            <person name="Elgersma Y."/>
            <person name="van Esbroeck A.C.M."/>
        </authorList>
    </citation>
    <scope>VARIANTS MRD74 TRP-64; GLN-99; ILE-108 AND 297-ARG--ASP-305 DEL</scope>
    <scope>CHARACTERIZATION OF VARIANT MRD74 297-ARG--ASP-305 DEL</scope>
    <scope>INVOLVEMENT IN MRD74</scope>
</reference>
<dbReference type="EMBL" id="M29063">
    <property type="protein sequence ID" value="AAA36576.1"/>
    <property type="molecule type" value="mRNA"/>
</dbReference>
<dbReference type="EMBL" id="M16342">
    <property type="protein sequence ID" value="AAA52680.1"/>
    <property type="molecule type" value="mRNA"/>
</dbReference>
<dbReference type="EMBL" id="BX161480">
    <property type="protein sequence ID" value="CAD61934.1"/>
    <property type="molecule type" value="mRNA"/>
</dbReference>
<dbReference type="EMBL" id="BX247961">
    <property type="protein sequence ID" value="CAD62300.1"/>
    <property type="molecule type" value="mRNA"/>
</dbReference>
<dbReference type="EMBL" id="BX247992">
    <property type="protein sequence ID" value="CAD62326.1"/>
    <property type="molecule type" value="mRNA"/>
</dbReference>
<dbReference type="EMBL" id="AB209527">
    <property type="protein sequence ID" value="BAD92764.1"/>
    <property type="status" value="ALT_INIT"/>
    <property type="molecule type" value="mRNA"/>
</dbReference>
<dbReference type="EMBL" id="AK223517">
    <property type="protein sequence ID" value="BAD97237.1"/>
    <property type="molecule type" value="mRNA"/>
</dbReference>
<dbReference type="EMBL" id="CH471078">
    <property type="protein sequence ID" value="EAW66392.1"/>
    <property type="molecule type" value="Genomic_DNA"/>
</dbReference>
<dbReference type="EMBL" id="CH471078">
    <property type="protein sequence ID" value="EAW66393.1"/>
    <property type="molecule type" value="Genomic_DNA"/>
</dbReference>
<dbReference type="EMBL" id="CH471078">
    <property type="protein sequence ID" value="EAW66394.1"/>
    <property type="molecule type" value="Genomic_DNA"/>
</dbReference>
<dbReference type="EMBL" id="CH471078">
    <property type="protein sequence ID" value="EAW66395.1"/>
    <property type="molecule type" value="Genomic_DNA"/>
</dbReference>
<dbReference type="EMBL" id="CH471078">
    <property type="protein sequence ID" value="EAW66396.1"/>
    <property type="molecule type" value="Genomic_DNA"/>
</dbReference>
<dbReference type="EMBL" id="CH471078">
    <property type="protein sequence ID" value="EAW66399.1"/>
    <property type="molecule type" value="Genomic_DNA"/>
</dbReference>
<dbReference type="EMBL" id="CH471078">
    <property type="protein sequence ID" value="EAW66400.1"/>
    <property type="molecule type" value="Genomic_DNA"/>
</dbReference>
<dbReference type="EMBL" id="BC003394">
    <property type="protein sequence ID" value="AAH03394.1"/>
    <property type="molecule type" value="mRNA"/>
</dbReference>
<dbReference type="EMBL" id="BC007052">
    <property type="protein sequence ID" value="AAH07052.1"/>
    <property type="molecule type" value="mRNA"/>
</dbReference>
<dbReference type="EMBL" id="BC008364">
    <property type="protein sequence ID" value="AAH08364.1"/>
    <property type="molecule type" value="mRNA"/>
</dbReference>
<dbReference type="EMBL" id="BC008423">
    <property type="protein sequence ID" value="AAH08423.1"/>
    <property type="molecule type" value="mRNA"/>
</dbReference>
<dbReference type="EMBL" id="BC066932">
    <property type="protein sequence ID" value="AAH66932.1"/>
    <property type="molecule type" value="mRNA"/>
</dbReference>
<dbReference type="EMBL" id="BC089438">
    <property type="protein sequence ID" value="AAH89438.1"/>
    <property type="molecule type" value="mRNA"/>
</dbReference>
<dbReference type="EMBL" id="BC108658">
    <property type="protein sequence ID" value="AAI08659.1"/>
    <property type="molecule type" value="mRNA"/>
</dbReference>
<dbReference type="EMBL" id="BC103758">
    <property type="protein sequence ID" value="AAI03759.1"/>
    <property type="molecule type" value="mRNA"/>
</dbReference>
<dbReference type="CCDS" id="CCDS41915.1">
    <molecule id="P07910-1"/>
</dbReference>
<dbReference type="CCDS" id="CCDS45079.1">
    <molecule id="P07910-2"/>
</dbReference>
<dbReference type="PIR" id="A26885">
    <property type="entry name" value="A26885"/>
</dbReference>
<dbReference type="PIR" id="C34504">
    <property type="entry name" value="C34504"/>
</dbReference>
<dbReference type="RefSeq" id="NP_001070910.1">
    <molecule id="P07910-1"/>
    <property type="nucleotide sequence ID" value="NM_001077442.2"/>
</dbReference>
<dbReference type="RefSeq" id="NP_001070911.1">
    <molecule id="P07910-2"/>
    <property type="nucleotide sequence ID" value="NM_001077443.2"/>
</dbReference>
<dbReference type="RefSeq" id="NP_004491.2">
    <molecule id="P07910-2"/>
    <property type="nucleotide sequence ID" value="NM_004500.4"/>
</dbReference>
<dbReference type="RefSeq" id="NP_112604.2">
    <molecule id="P07910-1"/>
    <property type="nucleotide sequence ID" value="NM_031314.3"/>
</dbReference>
<dbReference type="RefSeq" id="XP_006720188.1">
    <molecule id="P07910-2"/>
    <property type="nucleotide sequence ID" value="XM_006720125.4"/>
</dbReference>
<dbReference type="RefSeq" id="XP_011535010.1">
    <molecule id="P07910-1"/>
    <property type="nucleotide sequence ID" value="XM_011536708.2"/>
</dbReference>
<dbReference type="RefSeq" id="XP_011535011.1">
    <molecule id="P07910-1"/>
    <property type="nucleotide sequence ID" value="XM_011536709.4"/>
</dbReference>
<dbReference type="RefSeq" id="XP_011535012.1">
    <molecule id="P07910-1"/>
    <property type="nucleotide sequence ID" value="XM_011536710.3"/>
</dbReference>
<dbReference type="RefSeq" id="XP_011535013.1">
    <property type="nucleotide sequence ID" value="XM_011536711.2"/>
</dbReference>
<dbReference type="RefSeq" id="XP_011535014.1">
    <molecule id="P07910-2"/>
    <property type="nucleotide sequence ID" value="XM_011536712.3"/>
</dbReference>
<dbReference type="RefSeq" id="XP_016876741.1">
    <molecule id="P07910-2"/>
    <property type="nucleotide sequence ID" value="XM_017021252.3"/>
</dbReference>
<dbReference type="RefSeq" id="XP_016876742.1">
    <molecule id="P07910-2"/>
    <property type="nucleotide sequence ID" value="XM_017021253.3"/>
</dbReference>
<dbReference type="RefSeq" id="XP_024305324.1">
    <molecule id="P07910-1"/>
    <property type="nucleotide sequence ID" value="XM_024449556.2"/>
</dbReference>
<dbReference type="RefSeq" id="XP_024305325.1">
    <molecule id="P07910-1"/>
    <property type="nucleotide sequence ID" value="XM_024449557.2"/>
</dbReference>
<dbReference type="RefSeq" id="XP_024305326.1">
    <molecule id="P07910-2"/>
    <property type="nucleotide sequence ID" value="XM_024449558.2"/>
</dbReference>
<dbReference type="RefSeq" id="XP_024305327.1">
    <molecule id="P07910-2"/>
    <property type="nucleotide sequence ID" value="XM_024449559.2"/>
</dbReference>
<dbReference type="RefSeq" id="XP_047287285.1">
    <molecule id="P07910-1"/>
    <property type="nucleotide sequence ID" value="XM_047431329.1"/>
</dbReference>
<dbReference type="RefSeq" id="XP_047287286.1">
    <molecule id="P07910-2"/>
    <property type="nucleotide sequence ID" value="XM_047431330.1"/>
</dbReference>
<dbReference type="RefSeq" id="XP_047287287.1">
    <molecule id="P07910-2"/>
    <property type="nucleotide sequence ID" value="XM_047431331.1"/>
</dbReference>
<dbReference type="RefSeq" id="XP_054231923.1">
    <molecule id="P07910-1"/>
    <property type="nucleotide sequence ID" value="XM_054375948.1"/>
</dbReference>
<dbReference type="RefSeq" id="XP_054231924.1">
    <molecule id="P07910-1"/>
    <property type="nucleotide sequence ID" value="XM_054375949.1"/>
</dbReference>
<dbReference type="RefSeq" id="XP_054231925.1">
    <molecule id="P07910-1"/>
    <property type="nucleotide sequence ID" value="XM_054375950.1"/>
</dbReference>
<dbReference type="RefSeq" id="XP_054231926.1">
    <molecule id="P07910-1"/>
    <property type="nucleotide sequence ID" value="XM_054375951.1"/>
</dbReference>
<dbReference type="RefSeq" id="XP_054231927.1">
    <molecule id="P07910-1"/>
    <property type="nucleotide sequence ID" value="XM_054375952.1"/>
</dbReference>
<dbReference type="RefSeq" id="XP_054231928.1">
    <molecule id="P07910-1"/>
    <property type="nucleotide sequence ID" value="XM_054375953.1"/>
</dbReference>
<dbReference type="RefSeq" id="XP_054231929.1">
    <molecule id="P07910-2"/>
    <property type="nucleotide sequence ID" value="XM_054375954.1"/>
</dbReference>
<dbReference type="RefSeq" id="XP_054231930.1">
    <molecule id="P07910-2"/>
    <property type="nucleotide sequence ID" value="XM_054375955.1"/>
</dbReference>
<dbReference type="RefSeq" id="XP_054231931.1">
    <molecule id="P07910-2"/>
    <property type="nucleotide sequence ID" value="XM_054375956.1"/>
</dbReference>
<dbReference type="RefSeq" id="XP_054231932.1">
    <molecule id="P07910-2"/>
    <property type="nucleotide sequence ID" value="XM_054375957.1"/>
</dbReference>
<dbReference type="RefSeq" id="XP_054231933.1">
    <molecule id="P07910-2"/>
    <property type="nucleotide sequence ID" value="XM_054375958.1"/>
</dbReference>
<dbReference type="RefSeq" id="XP_054231934.1">
    <molecule id="P07910-2"/>
    <property type="nucleotide sequence ID" value="XM_054375959.1"/>
</dbReference>
<dbReference type="RefSeq" id="XP_054231935.1">
    <molecule id="P07910-2"/>
    <property type="nucleotide sequence ID" value="XM_054375960.1"/>
</dbReference>
<dbReference type="RefSeq" id="XP_054231936.1">
    <molecule id="P07910-2"/>
    <property type="nucleotide sequence ID" value="XM_054375961.1"/>
</dbReference>
<dbReference type="PDB" id="1TXP">
    <property type="method" value="NMR"/>
    <property type="chains" value="A/B/C/D=194-220"/>
</dbReference>
<dbReference type="PDB" id="1WF2">
    <property type="method" value="NMR"/>
    <property type="chains" value="A=8-92"/>
</dbReference>
<dbReference type="PDB" id="2MXY">
    <property type="method" value="NMR"/>
    <property type="chains" value="A=2-106"/>
</dbReference>
<dbReference type="PDB" id="2MZ1">
    <property type="method" value="NMR"/>
    <property type="chains" value="A=2-106"/>
</dbReference>
<dbReference type="PDB" id="3LN4">
    <property type="method" value="X-ray"/>
    <property type="resolution" value="1.30 A"/>
    <property type="chains" value="C=102-117"/>
</dbReference>
<dbReference type="PDBsum" id="1TXP"/>
<dbReference type="PDBsum" id="1WF2"/>
<dbReference type="PDBsum" id="2MXY"/>
<dbReference type="PDBsum" id="2MZ1"/>
<dbReference type="PDBsum" id="3LN4"/>
<dbReference type="BMRB" id="P07910"/>
<dbReference type="SMR" id="P07910"/>
<dbReference type="BioGRID" id="109424">
    <property type="interactions" value="691"/>
</dbReference>
<dbReference type="CORUM" id="P07910"/>
<dbReference type="DIP" id="DIP-29854N"/>
<dbReference type="FunCoup" id="P07910">
    <property type="interactions" value="2778"/>
</dbReference>
<dbReference type="IntAct" id="P07910">
    <property type="interactions" value="897"/>
</dbReference>
<dbReference type="MINT" id="P07910"/>
<dbReference type="STRING" id="9606.ENSP00000451291"/>
<dbReference type="ChEMBL" id="CHEMBL2216742"/>
<dbReference type="GlyGen" id="P07910">
    <property type="glycosylation" value="2 sites, 1 O-linked glycan (2 sites)"/>
</dbReference>
<dbReference type="iPTMnet" id="P07910"/>
<dbReference type="MetOSite" id="P07910"/>
<dbReference type="PhosphoSitePlus" id="P07910"/>
<dbReference type="SwissPalm" id="P07910"/>
<dbReference type="BioMuta" id="HNRNPC"/>
<dbReference type="DMDM" id="108935845"/>
<dbReference type="jPOST" id="P07910"/>
<dbReference type="MassIVE" id="P07910"/>
<dbReference type="PaxDb" id="9606-ENSP00000451291"/>
<dbReference type="PeptideAtlas" id="P07910"/>
<dbReference type="ProteomicsDB" id="52034">
    <molecule id="P07910-1"/>
</dbReference>
<dbReference type="ProteomicsDB" id="52035">
    <molecule id="P07910-2"/>
</dbReference>
<dbReference type="ProteomicsDB" id="52036">
    <molecule id="P07910-3"/>
</dbReference>
<dbReference type="ProteomicsDB" id="52037">
    <molecule id="P07910-4"/>
</dbReference>
<dbReference type="Pumba" id="P07910"/>
<dbReference type="TopDownProteomics" id="P07910-1">
    <molecule id="P07910-1"/>
</dbReference>
<dbReference type="TopDownProteomics" id="P07910-2">
    <molecule id="P07910-2"/>
</dbReference>
<dbReference type="Antibodypedia" id="3927">
    <property type="antibodies" value="491 antibodies from 38 providers"/>
</dbReference>
<dbReference type="DNASU" id="3183"/>
<dbReference type="Ensembl" id="ENST00000420743.6">
    <molecule id="P07910-1"/>
    <property type="protein sequence ID" value="ENSP00000404848.2"/>
    <property type="gene ID" value="ENSG00000092199.19"/>
</dbReference>
<dbReference type="Ensembl" id="ENST00000430246.6">
    <molecule id="P07910-2"/>
    <property type="protein sequence ID" value="ENSP00000442816.1"/>
    <property type="gene ID" value="ENSG00000092199.19"/>
</dbReference>
<dbReference type="Ensembl" id="ENST00000553300.6">
    <molecule id="P07910-2"/>
    <property type="protein sequence ID" value="ENSP00000450544.1"/>
    <property type="gene ID" value="ENSG00000092199.19"/>
</dbReference>
<dbReference type="Ensembl" id="ENST00000554455.5">
    <molecule id="P07910-1"/>
    <property type="protein sequence ID" value="ENSP00000451291.1"/>
    <property type="gene ID" value="ENSG00000092199.19"/>
</dbReference>
<dbReference type="Ensembl" id="ENST00000554969.5">
    <molecule id="P07910-2"/>
    <property type="protein sequence ID" value="ENSP00000450725.1"/>
    <property type="gene ID" value="ENSG00000092199.19"/>
</dbReference>
<dbReference type="Ensembl" id="ENST00000555883.5">
    <molecule id="P07910-4"/>
    <property type="protein sequence ID" value="ENSP00000450629.1"/>
    <property type="gene ID" value="ENSG00000092199.19"/>
</dbReference>
<dbReference type="Ensembl" id="ENST00000556628.5">
    <molecule id="P07910-3"/>
    <property type="protein sequence ID" value="ENSP00000451652.1"/>
    <property type="gene ID" value="ENSG00000092199.19"/>
</dbReference>
<dbReference type="Ensembl" id="ENST00000556897.5">
    <molecule id="P07910-2"/>
    <property type="protein sequence ID" value="ENSP00000451176.1"/>
    <property type="gene ID" value="ENSG00000092199.19"/>
</dbReference>
<dbReference type="Ensembl" id="ENST00000557201.5">
    <molecule id="P07910-1"/>
    <property type="protein sequence ID" value="ENSP00000452276.1"/>
    <property type="gene ID" value="ENSG00000092199.19"/>
</dbReference>
<dbReference type="GeneID" id="3183"/>
<dbReference type="KEGG" id="hsa:3183"/>
<dbReference type="MANE-Select" id="ENST00000553300.6">
    <molecule id="P07910-2"/>
    <property type="protein sequence ID" value="ENSP00000450544.1"/>
    <property type="RefSeq nucleotide sequence ID" value="NM_004500.4"/>
    <property type="RefSeq protein sequence ID" value="NP_004491.2"/>
</dbReference>
<dbReference type="UCSC" id="uc001vzw.5">
    <molecule id="P07910-1"/>
    <property type="organism name" value="human"/>
</dbReference>
<dbReference type="AGR" id="HGNC:5035"/>
<dbReference type="CTD" id="3183"/>
<dbReference type="DisGeNET" id="3183"/>
<dbReference type="GeneCards" id="HNRNPC"/>
<dbReference type="HGNC" id="HGNC:5035">
    <property type="gene designation" value="HNRNPC"/>
</dbReference>
<dbReference type="HPA" id="ENSG00000092199">
    <property type="expression patterns" value="Low tissue specificity"/>
</dbReference>
<dbReference type="MalaCards" id="HNRNPC"/>
<dbReference type="MIM" id="164020">
    <property type="type" value="gene"/>
</dbReference>
<dbReference type="MIM" id="620688">
    <property type="type" value="phenotype"/>
</dbReference>
<dbReference type="neXtProt" id="NX_P07910"/>
<dbReference type="OpenTargets" id="ENSG00000092199"/>
<dbReference type="Orphanet" id="528084">
    <property type="disease" value="Non-specific syndromic intellectual disability"/>
</dbReference>
<dbReference type="PharmGKB" id="PA162391217"/>
<dbReference type="VEuPathDB" id="HostDB:ENSG00000092199"/>
<dbReference type="eggNOG" id="KOG0118">
    <property type="taxonomic scope" value="Eukaryota"/>
</dbReference>
<dbReference type="GeneTree" id="ENSGT00940000153402"/>
<dbReference type="InParanoid" id="P07910"/>
<dbReference type="OrthoDB" id="9538853at2759"/>
<dbReference type="PAN-GO" id="P07910">
    <property type="GO annotations" value="2 GO annotations based on evolutionary models"/>
</dbReference>
<dbReference type="PhylomeDB" id="P07910"/>
<dbReference type="TreeFam" id="TF330974"/>
<dbReference type="PathwayCommons" id="P07910"/>
<dbReference type="Reactome" id="R-HSA-4570464">
    <property type="pathway name" value="SUMOylation of RNA binding proteins"/>
</dbReference>
<dbReference type="Reactome" id="R-HSA-72163">
    <property type="pathway name" value="mRNA Splicing - Major Pathway"/>
</dbReference>
<dbReference type="Reactome" id="R-HSA-72203">
    <property type="pathway name" value="Processing of Capped Intron-Containing Pre-mRNA"/>
</dbReference>
<dbReference type="Reactome" id="R-HSA-9013418">
    <property type="pathway name" value="RHOBTB2 GTPase cycle"/>
</dbReference>
<dbReference type="Reactome" id="R-HSA-9013422">
    <property type="pathway name" value="RHOBTB1 GTPase cycle"/>
</dbReference>
<dbReference type="SignaLink" id="P07910"/>
<dbReference type="SIGNOR" id="P07910"/>
<dbReference type="BioGRID-ORCS" id="3183">
    <property type="hits" value="745 hits in 1085 CRISPR screens"/>
</dbReference>
<dbReference type="CD-CODE" id="232F8A39">
    <property type="entry name" value="P-body"/>
</dbReference>
<dbReference type="CD-CODE" id="91857CE7">
    <property type="entry name" value="Nucleolus"/>
</dbReference>
<dbReference type="CD-CODE" id="DEE660B4">
    <property type="entry name" value="Stress granule"/>
</dbReference>
<dbReference type="ChiTaRS" id="HNRNPC">
    <property type="organism name" value="human"/>
</dbReference>
<dbReference type="EvolutionaryTrace" id="P07910"/>
<dbReference type="GeneWiki" id="HNRNPC"/>
<dbReference type="GenomeRNAi" id="3183"/>
<dbReference type="Pharos" id="P07910">
    <property type="development level" value="Tbio"/>
</dbReference>
<dbReference type="PRO" id="PR:P07910"/>
<dbReference type="Proteomes" id="UP000005640">
    <property type="component" value="Chromosome 14"/>
</dbReference>
<dbReference type="RNAct" id="P07910">
    <property type="molecule type" value="protein"/>
</dbReference>
<dbReference type="Bgee" id="ENSG00000092199">
    <property type="expression patterns" value="Expressed in ventricular zone and 180 other cell types or tissues"/>
</dbReference>
<dbReference type="ExpressionAtlas" id="P07910">
    <property type="expression patterns" value="baseline and differential"/>
</dbReference>
<dbReference type="GO" id="GO:0015629">
    <property type="term" value="C:actin cytoskeleton"/>
    <property type="evidence" value="ECO:0000314"/>
    <property type="project" value="UniProtKB"/>
</dbReference>
<dbReference type="GO" id="GO:0071013">
    <property type="term" value="C:catalytic step 2 spliceosome"/>
    <property type="evidence" value="ECO:0000314"/>
    <property type="project" value="UniProtKB"/>
</dbReference>
<dbReference type="GO" id="GO:0000785">
    <property type="term" value="C:chromatin"/>
    <property type="evidence" value="ECO:0007005"/>
    <property type="project" value="UniProtKB"/>
</dbReference>
<dbReference type="GO" id="GO:0005829">
    <property type="term" value="C:cytosol"/>
    <property type="evidence" value="ECO:0000314"/>
    <property type="project" value="UniProtKB"/>
</dbReference>
<dbReference type="GO" id="GO:0070062">
    <property type="term" value="C:extracellular exosome"/>
    <property type="evidence" value="ECO:0007005"/>
    <property type="project" value="UniProtKB"/>
</dbReference>
<dbReference type="GO" id="GO:0005576">
    <property type="term" value="C:extracellular region"/>
    <property type="evidence" value="ECO:0007005"/>
    <property type="project" value="BHF-UCL"/>
</dbReference>
<dbReference type="GO" id="GO:0016020">
    <property type="term" value="C:membrane"/>
    <property type="evidence" value="ECO:0007005"/>
    <property type="project" value="UniProtKB"/>
</dbReference>
<dbReference type="GO" id="GO:0005654">
    <property type="term" value="C:nucleoplasm"/>
    <property type="evidence" value="ECO:0000314"/>
    <property type="project" value="HPA"/>
</dbReference>
<dbReference type="GO" id="GO:0005634">
    <property type="term" value="C:nucleus"/>
    <property type="evidence" value="ECO:0000314"/>
    <property type="project" value="UniProtKB"/>
</dbReference>
<dbReference type="GO" id="GO:0032991">
    <property type="term" value="C:protein-containing complex"/>
    <property type="evidence" value="ECO:0000314"/>
    <property type="project" value="UniProtKB"/>
</dbReference>
<dbReference type="GO" id="GO:0005681">
    <property type="term" value="C:spliceosomal complex"/>
    <property type="evidence" value="ECO:0000314"/>
    <property type="project" value="HGNC-UCL"/>
</dbReference>
<dbReference type="GO" id="GO:0005697">
    <property type="term" value="C:telomerase holoenzyme complex"/>
    <property type="evidence" value="ECO:0000314"/>
    <property type="project" value="BHF-UCL"/>
</dbReference>
<dbReference type="GO" id="GO:0042802">
    <property type="term" value="F:identical protein binding"/>
    <property type="evidence" value="ECO:0000353"/>
    <property type="project" value="IntAct"/>
</dbReference>
<dbReference type="GO" id="GO:0003730">
    <property type="term" value="F:mRNA 3'-UTR binding"/>
    <property type="evidence" value="ECO:0000314"/>
    <property type="project" value="UniProtKB"/>
</dbReference>
<dbReference type="GO" id="GO:1990247">
    <property type="term" value="F:N6-methyladenosine-containing RNA reader activity"/>
    <property type="evidence" value="ECO:0000314"/>
    <property type="project" value="UniProtKB"/>
</dbReference>
<dbReference type="GO" id="GO:0031492">
    <property type="term" value="F:nucleosomal DNA binding"/>
    <property type="evidence" value="ECO:0007005"/>
    <property type="project" value="UniProtKB"/>
</dbReference>
<dbReference type="GO" id="GO:0008266">
    <property type="term" value="F:poly(U) RNA binding"/>
    <property type="evidence" value="ECO:0000314"/>
    <property type="project" value="UniProtKB"/>
</dbReference>
<dbReference type="GO" id="GO:0003723">
    <property type="term" value="F:RNA binding"/>
    <property type="evidence" value="ECO:0000353"/>
    <property type="project" value="BHF-UCL"/>
</dbReference>
<dbReference type="GO" id="GO:0070034">
    <property type="term" value="F:telomerase RNA binding"/>
    <property type="evidence" value="ECO:0000353"/>
    <property type="project" value="BHF-UCL"/>
</dbReference>
<dbReference type="GO" id="GO:0070935">
    <property type="term" value="P:3'-UTR-mediated mRNA stabilization"/>
    <property type="evidence" value="ECO:0000315"/>
    <property type="project" value="UniProtKB"/>
</dbReference>
<dbReference type="GO" id="GO:0006338">
    <property type="term" value="P:chromatin remodeling"/>
    <property type="evidence" value="ECO:0007005"/>
    <property type="project" value="GO_Central"/>
</dbReference>
<dbReference type="GO" id="GO:0000398">
    <property type="term" value="P:mRNA splicing, via spliceosome"/>
    <property type="evidence" value="ECO:0000315"/>
    <property type="project" value="UniProtKB"/>
</dbReference>
<dbReference type="GO" id="GO:0032211">
    <property type="term" value="P:negative regulation of telomere maintenance via telomerase"/>
    <property type="evidence" value="ECO:0000315"/>
    <property type="project" value="BHF-UCL"/>
</dbReference>
<dbReference type="GO" id="GO:0001649">
    <property type="term" value="P:osteoblast differentiation"/>
    <property type="evidence" value="ECO:0007005"/>
    <property type="project" value="UniProtKB"/>
</dbReference>
<dbReference type="GO" id="GO:0008380">
    <property type="term" value="P:RNA splicing"/>
    <property type="evidence" value="ECO:0000304"/>
    <property type="project" value="ProtInc"/>
</dbReference>
<dbReference type="CDD" id="cd12603">
    <property type="entry name" value="RRM_hnRNPC"/>
    <property type="match status" value="1"/>
</dbReference>
<dbReference type="FunFam" id="3.30.70.330:FF:000019">
    <property type="entry name" value="heterogeneous nuclear ribonucleoproteins C1/C2 isoform X1"/>
    <property type="match status" value="1"/>
</dbReference>
<dbReference type="Gene3D" id="3.30.70.330">
    <property type="match status" value="1"/>
</dbReference>
<dbReference type="InterPro" id="IPR017347">
    <property type="entry name" value="hnRNP_C"/>
</dbReference>
<dbReference type="InterPro" id="IPR012677">
    <property type="entry name" value="Nucleotide-bd_a/b_plait_sf"/>
</dbReference>
<dbReference type="InterPro" id="IPR035979">
    <property type="entry name" value="RBD_domain_sf"/>
</dbReference>
<dbReference type="InterPro" id="IPR000504">
    <property type="entry name" value="RRM_dom"/>
</dbReference>
<dbReference type="InterPro" id="IPR051186">
    <property type="entry name" value="RRM_HNRPC/RALY_subfam"/>
</dbReference>
<dbReference type="PANTHER" id="PTHR13968">
    <property type="entry name" value="HETEROGENEOUS NUCLEAR RIBONUCLEOPROTEIN"/>
    <property type="match status" value="1"/>
</dbReference>
<dbReference type="PANTHER" id="PTHR13968:SF3">
    <property type="entry name" value="HETEROGENEOUS NUCLEAR RIBONUCLEOPROTEINS C1_C2"/>
    <property type="match status" value="1"/>
</dbReference>
<dbReference type="Pfam" id="PF00076">
    <property type="entry name" value="RRM_1"/>
    <property type="match status" value="1"/>
</dbReference>
<dbReference type="PIRSF" id="PIRSF037992">
    <property type="entry name" value="hnRNP-C_Raly"/>
    <property type="match status" value="1"/>
</dbReference>
<dbReference type="SMART" id="SM00360">
    <property type="entry name" value="RRM"/>
    <property type="match status" value="1"/>
</dbReference>
<dbReference type="SUPFAM" id="SSF54928">
    <property type="entry name" value="RNA-binding domain, RBD"/>
    <property type="match status" value="1"/>
</dbReference>
<dbReference type="PROSITE" id="PS50102">
    <property type="entry name" value="RRM"/>
    <property type="match status" value="1"/>
</dbReference>
<gene>
    <name type="primary">HNRNPC</name>
    <name type="synonym">HNRPC</name>
</gene>
<accession>P07910</accession>
<accession>D3DS19</accession>
<accession>D3DS22</accession>
<accession>P22628</accession>
<accession>Q53EX2</accession>
<accession>Q59FD3</accession>
<accession>Q5FWE8</accession>
<accession>Q86SF8</accession>
<accession>Q86U45</accession>
<accession>Q96HK7</accession>
<accession>Q96HM4</accession>
<accession>Q96IY5</accession>
<accession>Q9BTS3</accession>
<comment type="function">
    <text evidence="8 12 15 18 19">Binds pre-mRNA and nucleates the assembly of 40S hnRNP particles (PubMed:8264621). Interacts with poly-U tracts in the 3'-UTR or 5'-UTR of mRNA and modulates the stability and the level of translation of bound mRNA molecules (PubMed:12509468, PubMed:16010978, PubMed:7567451, PubMed:8264621). Single HNRNPC tetramers bind 230-240 nucleotides. Trimers of HNRNPC tetramers bind 700 nucleotides (PubMed:8264621). May play a role in the early steps of spliceosome assembly and pre-mRNA splicing. N6-methyladenosine (m6A) has been shown to alter the local structure in mRNAs and long non-coding RNAs (lncRNAs) via a mechanism named 'm(6)A-switch', facilitating binding of HNRNPC, leading to regulation of mRNA splicing (PubMed:25719671).</text>
</comment>
<comment type="subunit">
    <text evidence="5 6 7 11 13 14 17 19">Tetramer composed of 3 copies of isoform C1 and 1 copy of isoform C2. Assembly of 3 tetramers with bound pre-mRNA gives rise to a 19S complex that interacts with HNRNPA2B1 tetramers. Component of the 40S hnRNP particle. Identified in the spliceosome C complex. Interacts with IGF2BP1. Interacts with DHX9; this interaction is direct, enhanced probably by their concomitant binding to RNA and mediates the attachment to actin filaments (PubMed:11687588). Interacts with PPIA/CYPA (PubMed:25678563). Interacts with YWHAE (PubMed:37599448).</text>
</comment>
<comment type="interaction">
    <interactant intactId="EBI-357966">
        <id>P07910</id>
    </interactant>
    <interactant intactId="EBI-374880">
        <id>Q99459</id>
        <label>CDC5L</label>
    </interactant>
    <organismsDiffer>false</organismsDiffer>
    <experiments>4</experiments>
</comment>
<comment type="interaction">
    <interactant intactId="EBI-357966">
        <id>P07910</id>
    </interactant>
    <interactant intactId="EBI-357942">
        <id>Q9NR30</id>
        <label>DDX21</label>
    </interactant>
    <organismsDiffer>false</organismsDiffer>
    <experiments>5</experiments>
</comment>
<comment type="interaction">
    <interactant intactId="EBI-357966">
        <id>P07910</id>
    </interactant>
    <interactant intactId="EBI-11988027">
        <id>Q9NRI5-2</id>
        <label>DISC1</label>
    </interactant>
    <organismsDiffer>false</organismsDiffer>
    <experiments>3</experiments>
</comment>
<comment type="interaction">
    <interactant intactId="EBI-357966">
        <id>P07910</id>
    </interactant>
    <interactant intactId="EBI-375576">
        <id>Q12929</id>
        <label>EPS8</label>
    </interactant>
    <organismsDiffer>false</organismsDiffer>
    <experiments>3</experiments>
</comment>
<comment type="interaction">
    <interactant intactId="EBI-357966">
        <id>P07910</id>
    </interactant>
    <interactant intactId="EBI-724553">
        <id>Q96QD9</id>
        <label>FYTTD1</label>
    </interactant>
    <organismsDiffer>false</organismsDiffer>
    <experiments>2</experiments>
</comment>
<comment type="interaction">
    <interactant intactId="EBI-357966">
        <id>P07910</id>
    </interactant>
    <interactant intactId="EBI-746309">
        <id>Q92917</id>
        <label>GPKOW</label>
    </interactant>
    <organismsDiffer>false</organismsDiffer>
    <experiments>3</experiments>
</comment>
<comment type="interaction">
    <interactant intactId="EBI-357966">
        <id>P07910</id>
    </interactant>
    <interactant intactId="EBI-352662">
        <id>P09651</id>
        <label>HNRNPA1</label>
    </interactant>
    <organismsDiffer>false</organismsDiffer>
    <experiments>5</experiments>
</comment>
<comment type="interaction">
    <interactant intactId="EBI-357966">
        <id>P07910</id>
    </interactant>
    <interactant intactId="EBI-299649">
        <id>P22626</id>
        <label>HNRNPA2B1</label>
    </interactant>
    <organismsDiffer>false</organismsDiffer>
    <experiments>3</experiments>
</comment>
<comment type="interaction">
    <interactant intactId="EBI-357966">
        <id>P07910</id>
    </interactant>
    <interactant intactId="EBI-357966">
        <id>P07910</id>
        <label>HNRNPC</label>
    </interactant>
    <organismsDiffer>false</organismsDiffer>
    <experiments>8</experiments>
</comment>
<comment type="interaction">
    <interactant intactId="EBI-357966">
        <id>P07910</id>
    </interactant>
    <interactant intactId="EBI-1046507">
        <id>O60812</id>
        <label>HNRNPCL1</label>
    </interactant>
    <organismsDiffer>false</organismsDiffer>
    <experiments>6</experiments>
</comment>
<comment type="interaction">
    <interactant intactId="EBI-357966">
        <id>P07910</id>
    </interactant>
    <interactant intactId="EBI-9512317">
        <id>B2RXH8</id>
        <label>HNRNPCL2</label>
    </interactant>
    <organismsDiffer>false</organismsDiffer>
    <experiments>4</experiments>
</comment>
<comment type="interaction">
    <interactant intactId="EBI-357966">
        <id>P07910</id>
    </interactant>
    <interactant intactId="EBI-299674">
        <id>Q14103</id>
        <label>HNRNPD</label>
    </interactant>
    <organismsDiffer>false</organismsDiffer>
    <experiments>3</experiments>
</comment>
<comment type="interaction">
    <interactant intactId="EBI-357966">
        <id>P07910</id>
    </interactant>
    <interactant intactId="EBI-466029">
        <id>P42858</id>
        <label>HTT</label>
    </interactant>
    <organismsDiffer>false</organismsDiffer>
    <experiments>7</experiments>
</comment>
<comment type="interaction">
    <interactant intactId="EBI-357966">
        <id>P07910</id>
    </interactant>
    <interactant intactId="EBI-1268946">
        <id>Q9NQR1</id>
        <label>KMT5A</label>
    </interactant>
    <organismsDiffer>false</organismsDiffer>
    <experiments>2</experiments>
</comment>
<comment type="interaction">
    <interactant intactId="EBI-357966">
        <id>P07910</id>
    </interactant>
    <interactant intactId="EBI-349938">
        <id>P52292</id>
        <label>KPNA2</label>
    </interactant>
    <organismsDiffer>false</organismsDiffer>
    <experiments>4</experiments>
</comment>
<comment type="interaction">
    <interactant intactId="EBI-357966">
        <id>P07910</id>
    </interactant>
    <interactant intactId="EBI-358297">
        <id>O00505</id>
        <label>KPNA3</label>
    </interactant>
    <organismsDiffer>false</organismsDiffer>
    <experiments>7</experiments>
</comment>
<comment type="interaction">
    <interactant intactId="EBI-357966">
        <id>P07910</id>
    </interactant>
    <interactant intactId="EBI-396343">
        <id>O00629</id>
        <label>KPNA4</label>
    </interactant>
    <organismsDiffer>false</organismsDiffer>
    <experiments>8</experiments>
</comment>
<comment type="interaction">
    <interactant intactId="EBI-357966">
        <id>P07910</id>
    </interactant>
    <interactant intactId="EBI-540602">
        <id>O15131</id>
        <label>KPNA5</label>
    </interactant>
    <organismsDiffer>false</organismsDiffer>
    <experiments>3</experiments>
</comment>
<comment type="interaction">
    <interactant intactId="EBI-357966">
        <id>P07910</id>
    </interactant>
    <interactant intactId="EBI-739696">
        <id>P25791</id>
        <label>LMO2</label>
    </interactant>
    <organismsDiffer>false</organismsDiffer>
    <experiments>3</experiments>
</comment>
<comment type="interaction">
    <interactant intactId="EBI-357966">
        <id>P07910</id>
    </interactant>
    <interactant intactId="EBI-16439278">
        <id>Q6FHY5</id>
        <label>MEOX2</label>
    </interactant>
    <organismsDiffer>false</organismsDiffer>
    <experiments>3</experiments>
</comment>
<comment type="interaction">
    <interactant intactId="EBI-357966">
        <id>P07910</id>
    </interactant>
    <interactant intactId="EBI-747278">
        <id>P26367</id>
        <label>PAX6</label>
    </interactant>
    <organismsDiffer>false</organismsDiffer>
    <experiments>3</experiments>
</comment>
<comment type="interaction">
    <interactant intactId="EBI-357966">
        <id>P07910</id>
    </interactant>
    <interactant intactId="EBI-9512693">
        <id>Q53GL6</id>
        <label>RALY</label>
    </interactant>
    <organismsDiffer>false</organismsDiffer>
    <experiments>3</experiments>
</comment>
<comment type="interaction">
    <interactant intactId="EBI-357966">
        <id>P07910</id>
    </interactant>
    <interactant intactId="EBI-714796">
        <id>Q9UKM9</id>
        <label>RALY</label>
    </interactant>
    <organismsDiffer>false</organismsDiffer>
    <experiments>5</experiments>
</comment>
<comment type="interaction">
    <interactant intactId="EBI-357966">
        <id>P07910</id>
    </interactant>
    <interactant intactId="EBI-741520">
        <id>Q86SE5</id>
        <label>RALYL</label>
    </interactant>
    <organismsDiffer>false</organismsDiffer>
    <experiments>7</experiments>
</comment>
<comment type="interaction">
    <interactant intactId="EBI-357966">
        <id>P07910</id>
    </interactant>
    <interactant intactId="EBI-11526555">
        <id>Q86SE5-3</id>
        <label>RALYL</label>
    </interactant>
    <organismsDiffer>false</organismsDiffer>
    <experiments>3</experiments>
</comment>
<comment type="interaction">
    <interactant intactId="EBI-357966">
        <id>P07910</id>
    </interactant>
    <interactant intactId="EBI-740773">
        <id>Q96IZ5</id>
        <label>RBM41</label>
    </interactant>
    <organismsDiffer>false</organismsDiffer>
    <experiments>5</experiments>
</comment>
<comment type="interaction">
    <interactant intactId="EBI-357966">
        <id>P07910</id>
    </interactant>
    <interactant intactId="EBI-11987469">
        <id>Q6ZRY4</id>
        <label>RBPMS2</label>
    </interactant>
    <organismsDiffer>false</organismsDiffer>
    <experiments>3</experiments>
</comment>
<comment type="interaction">
    <interactant intactId="EBI-357966">
        <id>P07910</id>
    </interactant>
    <interactant intactId="EBI-2340927">
        <id>P78317</id>
        <label>RNF4</label>
    </interactant>
    <organismsDiffer>false</organismsDiffer>
    <experiments>3</experiments>
</comment>
<comment type="interaction">
    <interactant intactId="EBI-357966">
        <id>P07910</id>
    </interactant>
    <interactant intactId="EBI-727004">
        <id>O00560</id>
        <label>SDCBP</label>
    </interactant>
    <organismsDiffer>false</organismsDiffer>
    <experiments>6</experiments>
</comment>
<comment type="interaction">
    <interactant intactId="EBI-357966">
        <id>P07910</id>
    </interactant>
    <interactant intactId="EBI-749111">
        <id>Q13435</id>
        <label>SF3B2</label>
    </interactant>
    <organismsDiffer>false</organismsDiffer>
    <experiments>3</experiments>
</comment>
<comment type="interaction">
    <interactant intactId="EBI-357966">
        <id>P07910</id>
    </interactant>
    <interactant intactId="EBI-1752330">
        <id>Q9BYB0</id>
        <label>SHANK3</label>
    </interactant>
    <organismsDiffer>false</organismsDiffer>
    <experiments>2</experiments>
</comment>
<comment type="interaction">
    <interactant intactId="EBI-357966">
        <id>P07910</id>
    </interactant>
    <interactant intactId="EBI-593303">
        <id>P78362</id>
        <label>SRPK2</label>
    </interactant>
    <organismsDiffer>false</organismsDiffer>
    <experiments>2</experiments>
</comment>
<comment type="interaction">
    <interactant intactId="EBI-357966">
        <id>P07910</id>
    </interactant>
    <interactant intactId="EBI-80140">
        <id>P63165</id>
        <label>SUMO1</label>
    </interactant>
    <organismsDiffer>false</organismsDiffer>
    <experiments>6</experiments>
</comment>
<comment type="interaction">
    <interactant intactId="EBI-357966">
        <id>P07910</id>
    </interactant>
    <interactant intactId="EBI-10175576">
        <id>G2XKQ0</id>
        <label>SUMO1P1</label>
    </interactant>
    <organismsDiffer>false</organismsDiffer>
    <experiments>3</experiments>
</comment>
<comment type="interaction">
    <interactant intactId="EBI-357966">
        <id>P07910</id>
    </interactant>
    <interactant intactId="EBI-372899">
        <id>Q13148</id>
        <label>TARDBP</label>
    </interactant>
    <organismsDiffer>false</organismsDiffer>
    <experiments>3</experiments>
</comment>
<comment type="interaction">
    <interactant intactId="EBI-357966">
        <id>P07910</id>
    </interactant>
    <interactant intactId="EBI-10180829">
        <id>Q7KZS0</id>
        <label>UBE2I</label>
    </interactant>
    <organismsDiffer>false</organismsDiffer>
    <experiments>3</experiments>
</comment>
<comment type="interaction">
    <interactant intactId="EBI-357966">
        <id>P07910</id>
    </interactant>
    <interactant intactId="EBI-714067">
        <id>Q9NQZ2</id>
        <label>UTP3</label>
    </interactant>
    <organismsDiffer>false</organismsDiffer>
    <experiments>3</experiments>
</comment>
<comment type="interaction">
    <interactant intactId="EBI-357966">
        <id>P07910</id>
    </interactant>
    <interactant intactId="EBI-347088">
        <id>P63104</id>
        <label>YWHAZ</label>
    </interactant>
    <organismsDiffer>false</organismsDiffer>
    <experiments>3</experiments>
</comment>
<comment type="interaction">
    <interactant intactId="EBI-357966">
        <id>P07910</id>
    </interactant>
    <interactant intactId="EBI-8656416">
        <id>Q68DK2-5</id>
        <label>ZFYVE26</label>
    </interactant>
    <organismsDiffer>false</organismsDiffer>
    <experiments>3</experiments>
</comment>
<comment type="interaction">
    <interactant intactId="EBI-5280084">
        <id>P07910-2</id>
    </interactant>
    <interactant intactId="EBI-466029">
        <id>P42858</id>
        <label>HTT</label>
    </interactant>
    <organismsDiffer>false</organismsDiffer>
    <experiments>9</experiments>
</comment>
<comment type="interaction">
    <interactant intactId="EBI-5280084">
        <id>P07910-2</id>
    </interactant>
    <interactant intactId="EBI-372899">
        <id>Q13148</id>
        <label>TARDBP</label>
    </interactant>
    <organismsDiffer>false</organismsDiffer>
    <experiments>6</experiments>
</comment>
<comment type="subcellular location">
    <subcellularLocation>
        <location evidence="17">Nucleus</location>
    </subcellularLocation>
    <text>Component of ribonucleosomes.</text>
</comment>
<comment type="alternative products">
    <event type="alternative splicing"/>
    <isoform>
        <id>P07910-1</id>
        <name>C2</name>
        <sequence type="displayed"/>
    </isoform>
    <isoform>
        <id>P07910-2</id>
        <name>C1</name>
        <sequence type="described" ref="VSP_005831"/>
    </isoform>
    <isoform>
        <id>P07910-3</id>
        <name>3</name>
        <sequence type="described" ref="VSP_019225"/>
    </isoform>
    <isoform>
        <id>P07910-4</id>
        <name>4</name>
        <sequence type="described" ref="VSP_005831 VSP_019226"/>
    </isoform>
</comment>
<comment type="PTM">
    <text evidence="9">Phosphorylated on Ser-260 and Ser-299 in resting cells. Phosphorylated on Ser-253 and on 1 serine residue in the poly-Ser stretch at position 238 in response to hydrogen peroxide.</text>
</comment>
<comment type="PTM">
    <text evidence="10">Sumoylated. Sumoylation reduces affinity for mRNA.</text>
</comment>
<comment type="PTM">
    <text evidence="17">Ubiquitinated and degraded after nucleo-cytoplasmic transport by YWHAE.</text>
</comment>
<comment type="disease" evidence="16">
    <disease id="DI-06839">
        <name>Intellectual developmental disorder, autosomal dominant 74</name>
        <acronym>MRD74</acronym>
        <description>An autosomal dominant disorder characterized by global developmental delay, including delay of motor skills and speech delay, intellectual disability, behavioral abnormalities, and subtle facial dysmorphology.</description>
        <dbReference type="MIM" id="620688"/>
    </disease>
    <text>The disease is caused by variants affecting the gene represented in this entry.</text>
</comment>
<comment type="similarity">
    <text evidence="24">Belongs to the RRM HNRPC family. RALY subfamily.</text>
</comment>
<comment type="sequence caution" evidence="24">
    <conflict type="erroneous initiation">
        <sequence resource="EMBL-CDS" id="BAD92764"/>
    </conflict>
    <text>Extended N-terminus.</text>
</comment>
<proteinExistence type="evidence at protein level"/>